<organism>
    <name type="scientific">Homo sapiens</name>
    <name type="common">Human</name>
    <dbReference type="NCBI Taxonomy" id="9606"/>
    <lineage>
        <taxon>Eukaryota</taxon>
        <taxon>Metazoa</taxon>
        <taxon>Chordata</taxon>
        <taxon>Craniata</taxon>
        <taxon>Vertebrata</taxon>
        <taxon>Euteleostomi</taxon>
        <taxon>Mammalia</taxon>
        <taxon>Eutheria</taxon>
        <taxon>Euarchontoglires</taxon>
        <taxon>Primates</taxon>
        <taxon>Haplorrhini</taxon>
        <taxon>Catarrhini</taxon>
        <taxon>Hominidae</taxon>
        <taxon>Homo</taxon>
    </lineage>
</organism>
<accession>O60733</accession>
<accession>A8K597</accession>
<accession>B0QYE8</accession>
<accession>O75645</accession>
<accession>Q8N452</accession>
<accession>Q9UG29</accession>
<accession>Q9UIT0</accession>
<accession>Q9Y671</accession>
<reference key="1">
    <citation type="journal article" date="1998" name="J. Biol. Chem.">
        <title>Multiple splice variants of the human calcium-independent phospholipase A2 and their effect on enzyme activity.</title>
        <authorList>
            <person name="Larsson P.K.A."/>
            <person name="Claesson H.-E."/>
            <person name="Kennedy B.P."/>
        </authorList>
    </citation>
    <scope>NUCLEOTIDE SEQUENCE [MRNA] (ISOFORMS LH-IPLA2; ANKYRIN-IPLA2-1 AND ANKYRIN-IPLA2-2)</scope>
    <scope>FUNCTION</scope>
    <source>
        <tissue>B-cell</tissue>
        <tissue>Testis</tissue>
    </source>
</reference>
<reference key="2">
    <citation type="journal article" date="1999" name="J. Biol. Chem.">
        <title>Human pancreatic islets express mRNA species encoding two distinct catalytically active isoforms of group VI phospholipase A2 (iPLA2) that arise from an exon-skipping mechanism of alternative splicing of the transcript from the iPLA2 gene on chromosome 22q13.1.</title>
        <authorList>
            <person name="Ma Z."/>
            <person name="Wang X."/>
            <person name="Nowatzke W."/>
            <person name="Ramanadham S."/>
            <person name="Turk J."/>
        </authorList>
    </citation>
    <scope>NUCLEOTIDE SEQUENCE [GENOMIC DNA / MRNA] (ISOFORMS LH-IPLA2 AND SH-IPLA2)</scope>
    <scope>FUNCTION</scope>
    <scope>CATALYTIC ACTIVITY</scope>
    <scope>ACTIVITY REGULATION</scope>
    <source>
        <tissue>Pancreatic islet</tissue>
    </source>
</reference>
<reference key="3">
    <citation type="journal article" date="1999" name="Eur. J. Biochem.">
        <title>The human calcium-independent phospholipase A2 gene. Multiple enzymes with distinct properties from a single gene.</title>
        <authorList>
            <person name="Larsson Forsell P.K.A."/>
            <person name="Kennedy B.P."/>
            <person name="Claesson H.-E."/>
        </authorList>
    </citation>
    <scope>NUCLEOTIDE SEQUENCE [GENOMIC DNA]</scope>
    <scope>ALTERNATIVE SPLICING</scope>
    <scope>FUNCTION</scope>
</reference>
<reference key="4">
    <citation type="journal article" date="2007" name="BMC Genomics">
        <title>The full-ORF clone resource of the German cDNA consortium.</title>
        <authorList>
            <person name="Bechtel S."/>
            <person name="Rosenfelder H."/>
            <person name="Duda A."/>
            <person name="Schmidt C.P."/>
            <person name="Ernst U."/>
            <person name="Wellenreuther R."/>
            <person name="Mehrle A."/>
            <person name="Schuster C."/>
            <person name="Bahr A."/>
            <person name="Bloecker H."/>
            <person name="Heubner D."/>
            <person name="Hoerlein A."/>
            <person name="Michel G."/>
            <person name="Wedler H."/>
            <person name="Koehrer K."/>
            <person name="Ottenwaelder B."/>
            <person name="Poustka A."/>
            <person name="Wiemann S."/>
            <person name="Schupp I."/>
        </authorList>
    </citation>
    <scope>NUCLEOTIDE SEQUENCE [LARGE SCALE MRNA] (ISOFORM LH-IPLA2)</scope>
    <source>
        <tissue>Testis</tissue>
    </source>
</reference>
<reference key="5">
    <citation type="journal article" date="2004" name="Genome Biol.">
        <title>A genome annotation-driven approach to cloning the human ORFeome.</title>
        <authorList>
            <person name="Collins J.E."/>
            <person name="Wright C.L."/>
            <person name="Edwards C.A."/>
            <person name="Davis M.P."/>
            <person name="Grinham J.A."/>
            <person name="Cole C.G."/>
            <person name="Goward M.E."/>
            <person name="Aguado B."/>
            <person name="Mallya M."/>
            <person name="Mokrab Y."/>
            <person name="Huckle E.J."/>
            <person name="Beare D.M."/>
            <person name="Dunham I."/>
        </authorList>
    </citation>
    <scope>NUCLEOTIDE SEQUENCE [LARGE SCALE MRNA] (ISOFORM LH-IPLA2)</scope>
</reference>
<reference key="6">
    <citation type="submission" date="2004-01" db="EMBL/GenBank/DDBJ databases">
        <authorList>
            <consortium name="NIEHS SNPs program"/>
        </authorList>
    </citation>
    <scope>NUCLEOTIDE SEQUENCE [GENOMIC DNA]</scope>
    <scope>VARIANTS ILE-58; GLY-63; GLN-70; ASN-183 AND THR-343</scope>
</reference>
<reference key="7">
    <citation type="journal article" date="2004" name="Nat. Genet.">
        <title>Complete sequencing and characterization of 21,243 full-length human cDNAs.</title>
        <authorList>
            <person name="Ota T."/>
            <person name="Suzuki Y."/>
            <person name="Nishikawa T."/>
            <person name="Otsuki T."/>
            <person name="Sugiyama T."/>
            <person name="Irie R."/>
            <person name="Wakamatsu A."/>
            <person name="Hayashi K."/>
            <person name="Sato H."/>
            <person name="Nagai K."/>
            <person name="Kimura K."/>
            <person name="Makita H."/>
            <person name="Sekine M."/>
            <person name="Obayashi M."/>
            <person name="Nishi T."/>
            <person name="Shibahara T."/>
            <person name="Tanaka T."/>
            <person name="Ishii S."/>
            <person name="Yamamoto J."/>
            <person name="Saito K."/>
            <person name="Kawai Y."/>
            <person name="Isono Y."/>
            <person name="Nakamura Y."/>
            <person name="Nagahari K."/>
            <person name="Murakami K."/>
            <person name="Yasuda T."/>
            <person name="Iwayanagi T."/>
            <person name="Wagatsuma M."/>
            <person name="Shiratori A."/>
            <person name="Sudo H."/>
            <person name="Hosoiri T."/>
            <person name="Kaku Y."/>
            <person name="Kodaira H."/>
            <person name="Kondo H."/>
            <person name="Sugawara M."/>
            <person name="Takahashi M."/>
            <person name="Kanda K."/>
            <person name="Yokoi T."/>
            <person name="Furuya T."/>
            <person name="Kikkawa E."/>
            <person name="Omura Y."/>
            <person name="Abe K."/>
            <person name="Kamihara K."/>
            <person name="Katsuta N."/>
            <person name="Sato K."/>
            <person name="Tanikawa M."/>
            <person name="Yamazaki M."/>
            <person name="Ninomiya K."/>
            <person name="Ishibashi T."/>
            <person name="Yamashita H."/>
            <person name="Murakawa K."/>
            <person name="Fujimori K."/>
            <person name="Tanai H."/>
            <person name="Kimata M."/>
            <person name="Watanabe M."/>
            <person name="Hiraoka S."/>
            <person name="Chiba Y."/>
            <person name="Ishida S."/>
            <person name="Ono Y."/>
            <person name="Takiguchi S."/>
            <person name="Watanabe S."/>
            <person name="Yosida M."/>
            <person name="Hotuta T."/>
            <person name="Kusano J."/>
            <person name="Kanehori K."/>
            <person name="Takahashi-Fujii A."/>
            <person name="Hara H."/>
            <person name="Tanase T.-O."/>
            <person name="Nomura Y."/>
            <person name="Togiya S."/>
            <person name="Komai F."/>
            <person name="Hara R."/>
            <person name="Takeuchi K."/>
            <person name="Arita M."/>
            <person name="Imose N."/>
            <person name="Musashino K."/>
            <person name="Yuuki H."/>
            <person name="Oshima A."/>
            <person name="Sasaki N."/>
            <person name="Aotsuka S."/>
            <person name="Yoshikawa Y."/>
            <person name="Matsunawa H."/>
            <person name="Ichihara T."/>
            <person name="Shiohata N."/>
            <person name="Sano S."/>
            <person name="Moriya S."/>
            <person name="Momiyama H."/>
            <person name="Satoh N."/>
            <person name="Takami S."/>
            <person name="Terashima Y."/>
            <person name="Suzuki O."/>
            <person name="Nakagawa S."/>
            <person name="Senoh A."/>
            <person name="Mizoguchi H."/>
            <person name="Goto Y."/>
            <person name="Shimizu F."/>
            <person name="Wakebe H."/>
            <person name="Hishigaki H."/>
            <person name="Watanabe T."/>
            <person name="Sugiyama A."/>
            <person name="Takemoto M."/>
            <person name="Kawakami B."/>
            <person name="Yamazaki M."/>
            <person name="Watanabe K."/>
            <person name="Kumagai A."/>
            <person name="Itakura S."/>
            <person name="Fukuzumi Y."/>
            <person name="Fujimori Y."/>
            <person name="Komiyama M."/>
            <person name="Tashiro H."/>
            <person name="Tanigami A."/>
            <person name="Fujiwara T."/>
            <person name="Ono T."/>
            <person name="Yamada K."/>
            <person name="Fujii Y."/>
            <person name="Ozaki K."/>
            <person name="Hirao M."/>
            <person name="Ohmori Y."/>
            <person name="Kawabata A."/>
            <person name="Hikiji T."/>
            <person name="Kobatake N."/>
            <person name="Inagaki H."/>
            <person name="Ikema Y."/>
            <person name="Okamoto S."/>
            <person name="Okitani R."/>
            <person name="Kawakami T."/>
            <person name="Noguchi S."/>
            <person name="Itoh T."/>
            <person name="Shigeta K."/>
            <person name="Senba T."/>
            <person name="Matsumura K."/>
            <person name="Nakajima Y."/>
            <person name="Mizuno T."/>
            <person name="Morinaga M."/>
            <person name="Sasaki M."/>
            <person name="Togashi T."/>
            <person name="Oyama M."/>
            <person name="Hata H."/>
            <person name="Watanabe M."/>
            <person name="Komatsu T."/>
            <person name="Mizushima-Sugano J."/>
            <person name="Satoh T."/>
            <person name="Shirai Y."/>
            <person name="Takahashi Y."/>
            <person name="Nakagawa K."/>
            <person name="Okumura K."/>
            <person name="Nagase T."/>
            <person name="Nomura N."/>
            <person name="Kikuchi H."/>
            <person name="Masuho Y."/>
            <person name="Yamashita R."/>
            <person name="Nakai K."/>
            <person name="Yada T."/>
            <person name="Nakamura Y."/>
            <person name="Ohara O."/>
            <person name="Isogai T."/>
            <person name="Sugano S."/>
        </authorList>
    </citation>
    <scope>NUCLEOTIDE SEQUENCE [LARGE SCALE MRNA] (ISOFORM LH-IPLA2)</scope>
</reference>
<reference key="8">
    <citation type="journal article" date="1999" name="Nature">
        <title>The DNA sequence of human chromosome 22.</title>
        <authorList>
            <person name="Dunham I."/>
            <person name="Hunt A.R."/>
            <person name="Collins J.E."/>
            <person name="Bruskiewich R."/>
            <person name="Beare D.M."/>
            <person name="Clamp M."/>
            <person name="Smink L.J."/>
            <person name="Ainscough R."/>
            <person name="Almeida J.P."/>
            <person name="Babbage A.K."/>
            <person name="Bagguley C."/>
            <person name="Bailey J."/>
            <person name="Barlow K.F."/>
            <person name="Bates K.N."/>
            <person name="Beasley O.P."/>
            <person name="Bird C.P."/>
            <person name="Blakey S.E."/>
            <person name="Bridgeman A.M."/>
            <person name="Buck D."/>
            <person name="Burgess J."/>
            <person name="Burrill W.D."/>
            <person name="Burton J."/>
            <person name="Carder C."/>
            <person name="Carter N.P."/>
            <person name="Chen Y."/>
            <person name="Clark G."/>
            <person name="Clegg S.M."/>
            <person name="Cobley V.E."/>
            <person name="Cole C.G."/>
            <person name="Collier R.E."/>
            <person name="Connor R."/>
            <person name="Conroy D."/>
            <person name="Corby N.R."/>
            <person name="Coville G.J."/>
            <person name="Cox A.V."/>
            <person name="Davis J."/>
            <person name="Dawson E."/>
            <person name="Dhami P.D."/>
            <person name="Dockree C."/>
            <person name="Dodsworth S.J."/>
            <person name="Durbin R.M."/>
            <person name="Ellington A.G."/>
            <person name="Evans K.L."/>
            <person name="Fey J.M."/>
            <person name="Fleming K."/>
            <person name="French L."/>
            <person name="Garner A.A."/>
            <person name="Gilbert J.G.R."/>
            <person name="Goward M.E."/>
            <person name="Grafham D.V."/>
            <person name="Griffiths M.N.D."/>
            <person name="Hall C."/>
            <person name="Hall R.E."/>
            <person name="Hall-Tamlyn G."/>
            <person name="Heathcott R.W."/>
            <person name="Ho S."/>
            <person name="Holmes S."/>
            <person name="Hunt S.E."/>
            <person name="Jones M.C."/>
            <person name="Kershaw J."/>
            <person name="Kimberley A.M."/>
            <person name="King A."/>
            <person name="Laird G.K."/>
            <person name="Langford C.F."/>
            <person name="Leversha M.A."/>
            <person name="Lloyd C."/>
            <person name="Lloyd D.M."/>
            <person name="Martyn I.D."/>
            <person name="Mashreghi-Mohammadi M."/>
            <person name="Matthews L.H."/>
            <person name="Mccann O.T."/>
            <person name="Mcclay J."/>
            <person name="Mclaren S."/>
            <person name="McMurray A.A."/>
            <person name="Milne S.A."/>
            <person name="Mortimore B.J."/>
            <person name="Odell C.N."/>
            <person name="Pavitt R."/>
            <person name="Pearce A.V."/>
            <person name="Pearson D."/>
            <person name="Phillimore B.J.C.T."/>
            <person name="Phillips S.H."/>
            <person name="Plumb R.W."/>
            <person name="Ramsay H."/>
            <person name="Ramsey Y."/>
            <person name="Rogers L."/>
            <person name="Ross M.T."/>
            <person name="Scott C.E."/>
            <person name="Sehra H.K."/>
            <person name="Skuce C.D."/>
            <person name="Smalley S."/>
            <person name="Smith M.L."/>
            <person name="Soderlund C."/>
            <person name="Spragon L."/>
            <person name="Steward C.A."/>
            <person name="Sulston J.E."/>
            <person name="Swann R.M."/>
            <person name="Vaudin M."/>
            <person name="Wall M."/>
            <person name="Wallis J.M."/>
            <person name="Whiteley M.N."/>
            <person name="Willey D.L."/>
            <person name="Williams L."/>
            <person name="Williams S.A."/>
            <person name="Williamson H."/>
            <person name="Wilmer T.E."/>
            <person name="Wilming L."/>
            <person name="Wright C.L."/>
            <person name="Hubbard T."/>
            <person name="Bentley D.R."/>
            <person name="Beck S."/>
            <person name="Rogers J."/>
            <person name="Shimizu N."/>
            <person name="Minoshima S."/>
            <person name="Kawasaki K."/>
            <person name="Sasaki T."/>
            <person name="Asakawa S."/>
            <person name="Kudoh J."/>
            <person name="Shintani A."/>
            <person name="Shibuya K."/>
            <person name="Yoshizaki Y."/>
            <person name="Aoki N."/>
            <person name="Mitsuyama S."/>
            <person name="Roe B.A."/>
            <person name="Chen F."/>
            <person name="Chu L."/>
            <person name="Crabtree J."/>
            <person name="Deschamps S."/>
            <person name="Do A."/>
            <person name="Do T."/>
            <person name="Dorman A."/>
            <person name="Fang F."/>
            <person name="Fu Y."/>
            <person name="Hu P."/>
            <person name="Hua A."/>
            <person name="Kenton S."/>
            <person name="Lai H."/>
            <person name="Lao H.I."/>
            <person name="Lewis J."/>
            <person name="Lewis S."/>
            <person name="Lin S.-P."/>
            <person name="Loh P."/>
            <person name="Malaj E."/>
            <person name="Nguyen T."/>
            <person name="Pan H."/>
            <person name="Phan S."/>
            <person name="Qi S."/>
            <person name="Qian Y."/>
            <person name="Ray L."/>
            <person name="Ren Q."/>
            <person name="Shaull S."/>
            <person name="Sloan D."/>
            <person name="Song L."/>
            <person name="Wang Q."/>
            <person name="Wang Y."/>
            <person name="Wang Z."/>
            <person name="White J."/>
            <person name="Willingham D."/>
            <person name="Wu H."/>
            <person name="Yao Z."/>
            <person name="Zhan M."/>
            <person name="Zhang G."/>
            <person name="Chissoe S."/>
            <person name="Murray J."/>
            <person name="Miller N."/>
            <person name="Minx P."/>
            <person name="Fulton R."/>
            <person name="Johnson D."/>
            <person name="Bemis G."/>
            <person name="Bentley D."/>
            <person name="Bradshaw H."/>
            <person name="Bourne S."/>
            <person name="Cordes M."/>
            <person name="Du Z."/>
            <person name="Fulton L."/>
            <person name="Goela D."/>
            <person name="Graves T."/>
            <person name="Hawkins J."/>
            <person name="Hinds K."/>
            <person name="Kemp K."/>
            <person name="Latreille P."/>
            <person name="Layman D."/>
            <person name="Ozersky P."/>
            <person name="Rohlfing T."/>
            <person name="Scheet P."/>
            <person name="Walker C."/>
            <person name="Wamsley A."/>
            <person name="Wohldmann P."/>
            <person name="Pepin K."/>
            <person name="Nelson J."/>
            <person name="Korf I."/>
            <person name="Bedell J.A."/>
            <person name="Hillier L.W."/>
            <person name="Mardis E."/>
            <person name="Waterston R."/>
            <person name="Wilson R."/>
            <person name="Emanuel B.S."/>
            <person name="Shaikh T."/>
            <person name="Kurahashi H."/>
            <person name="Saitta S."/>
            <person name="Budarf M.L."/>
            <person name="McDermid H.E."/>
            <person name="Johnson A."/>
            <person name="Wong A.C.C."/>
            <person name="Morrow B.E."/>
            <person name="Edelmann L."/>
            <person name="Kim U.J."/>
            <person name="Shizuya H."/>
            <person name="Simon M.I."/>
            <person name="Dumanski J.P."/>
            <person name="Peyrard M."/>
            <person name="Kedra D."/>
            <person name="Seroussi E."/>
            <person name="Fransson I."/>
            <person name="Tapia I."/>
            <person name="Bruder C.E."/>
            <person name="O'Brien K.P."/>
            <person name="Wilkinson P."/>
            <person name="Bodenteich A."/>
            <person name="Hartman K."/>
            <person name="Hu X."/>
            <person name="Khan A.S."/>
            <person name="Lane L."/>
            <person name="Tilahun Y."/>
            <person name="Wright H."/>
        </authorList>
    </citation>
    <scope>NUCLEOTIDE SEQUENCE [LARGE SCALE GENOMIC DNA]</scope>
</reference>
<reference key="9">
    <citation type="submission" date="2005-07" db="EMBL/GenBank/DDBJ databases">
        <authorList>
            <person name="Mural R.J."/>
            <person name="Istrail S."/>
            <person name="Sutton G.G."/>
            <person name="Florea L."/>
            <person name="Halpern A.L."/>
            <person name="Mobarry C.M."/>
            <person name="Lippert R."/>
            <person name="Walenz B."/>
            <person name="Shatkay H."/>
            <person name="Dew I."/>
            <person name="Miller J.R."/>
            <person name="Flanigan M.J."/>
            <person name="Edwards N.J."/>
            <person name="Bolanos R."/>
            <person name="Fasulo D."/>
            <person name="Halldorsson B.V."/>
            <person name="Hannenhalli S."/>
            <person name="Turner R."/>
            <person name="Yooseph S."/>
            <person name="Lu F."/>
            <person name="Nusskern D.R."/>
            <person name="Shue B.C."/>
            <person name="Zheng X.H."/>
            <person name="Zhong F."/>
            <person name="Delcher A.L."/>
            <person name="Huson D.H."/>
            <person name="Kravitz S.A."/>
            <person name="Mouchard L."/>
            <person name="Reinert K."/>
            <person name="Remington K.A."/>
            <person name="Clark A.G."/>
            <person name="Waterman M.S."/>
            <person name="Eichler E.E."/>
            <person name="Adams M.D."/>
            <person name="Hunkapiller M.W."/>
            <person name="Myers E.W."/>
            <person name="Venter J.C."/>
        </authorList>
    </citation>
    <scope>NUCLEOTIDE SEQUENCE [LARGE SCALE GENOMIC DNA]</scope>
</reference>
<reference key="10">
    <citation type="journal article" date="2004" name="Genome Res.">
        <title>The status, quality, and expansion of the NIH full-length cDNA project: the Mammalian Gene Collection (MGC).</title>
        <authorList>
            <consortium name="The MGC Project Team"/>
        </authorList>
    </citation>
    <scope>NUCLEOTIDE SEQUENCE [LARGE SCALE MRNA] (ISOFORMS LH-IPLA2 AND SH-IPLA2)</scope>
    <source>
        <tissue>Brain</tissue>
    </source>
</reference>
<reference key="11">
    <citation type="journal article" date="2008" name="J. Exp. Med.">
        <title>iPLA2beta: front and center in human monocyte chemotaxis to MCP-1.</title>
        <authorList>
            <person name="Mishra R.S."/>
            <person name="Carnevale K.A."/>
            <person name="Cathcart M.K."/>
        </authorList>
    </citation>
    <scope>FUNCTION IN CHEMOTAXIS</scope>
    <scope>SUBCELLULAR LOCATION</scope>
</reference>
<reference key="12">
    <citation type="journal article" date="2009" name="J. Lipid Res.">
        <title>Mammalian patatin domain containing proteins: a family with diverse lipolytic activities involved in multiple biological functions.</title>
        <authorList>
            <person name="Kienesberger P.C."/>
            <person name="Oberer M."/>
            <person name="Lass A."/>
            <person name="Zechner R."/>
        </authorList>
    </citation>
    <scope>REVIEW ON FAMILY</scope>
</reference>
<reference key="13">
    <citation type="journal article" date="2009" name="Proc. Natl. Acad. Sci. U.S.A.">
        <title>Role of calcium-independent phospholipase A2 in the pathogenesis of Barth syndrome.</title>
        <authorList>
            <person name="Malhotra A."/>
            <person name="Edelman-Novemsky I."/>
            <person name="Xu Y."/>
            <person name="Plesken H."/>
            <person name="Ma J."/>
            <person name="Schlame M."/>
            <person name="Ren M."/>
        </authorList>
    </citation>
    <scope>FUNCTION</scope>
    <scope>PHARMACEUTICAL USE</scope>
</reference>
<reference key="14">
    <citation type="journal article" date="2010" name="PLoS ONE">
        <title>Catalytic function of PLA2G6 is impaired by mutations associated with infantile neuroaxonal dystrophy but not dystonia-parkinsonism.</title>
        <authorList>
            <person name="Engel L.A."/>
            <person name="Jing Z."/>
            <person name="O'Brien D.E."/>
            <person name="Sun M."/>
            <person name="Kotzbauer P.T."/>
        </authorList>
    </citation>
    <scope>FUNCTION</scope>
    <scope>CATALYTIC ACTIVITY</scope>
    <scope>VARIANTS THR-341; CYS-517; TRP-632; ARG-638; VAL-691 DEL; GLN-741; TRP-741; TRP-747 AND 790-TYR--PRO-806 DEL</scope>
    <scope>MUTAGENESIS OF SER-519</scope>
</reference>
<reference key="15">
    <citation type="journal article" date="2013" name="PLoS ONE">
        <title>Assessing phospholipase A2 activity toward cardiolipin by mass spectrometry.</title>
        <authorList>
            <person name="Hsu Y.H."/>
            <person name="Dumlao D.S."/>
            <person name="Cao J."/>
            <person name="Dennis E.A."/>
        </authorList>
    </citation>
    <scope>FUNCTION</scope>
    <scope>CATALYTIC ACTIVITY</scope>
</reference>
<reference key="16">
    <citation type="journal article" date="2013" name="PLoS ONE">
        <authorList>
            <person name="Hsu Y.H."/>
            <person name="Dumlao D.S."/>
            <person name="Cao J."/>
            <person name="Dennis E.A."/>
        </authorList>
    </citation>
    <scope>ERRATUM OF PUBMED:23533611</scope>
</reference>
<reference key="17">
    <citation type="journal article" date="2006" name="Am. J. Hum. Genet.">
        <title>PLA2G6 mutation underlies infantile neuroaxonal dystrophy.</title>
        <authorList>
            <person name="Khateeb S."/>
            <person name="Flusser H."/>
            <person name="Ofir R."/>
            <person name="Shelef I."/>
            <person name="Narkis G."/>
            <person name="Vardi G."/>
            <person name="Shorer Z."/>
            <person name="Levy R."/>
            <person name="Galil A."/>
            <person name="Elbedour K."/>
            <person name="Birk O.S."/>
        </authorList>
    </citation>
    <scope>VARIANT NBIA2A VAL-691 DEL</scope>
</reference>
<reference key="18">
    <citation type="journal article" date="2006" name="Nat. Genet.">
        <title>PLA2G6, encoding a phospholipase A2, is mutated in neurodegenerative disorders with high brain iron.</title>
        <authorList>
            <person name="Morgan N.V."/>
            <person name="Westaway S.K."/>
            <person name="Morton J.E."/>
            <person name="Gregory A."/>
            <person name="Gissen P."/>
            <person name="Sonek S."/>
            <person name="Cangul H."/>
            <person name="Coryell J."/>
            <person name="Canham N."/>
            <person name="Nardocci N."/>
            <person name="Zorzi G."/>
            <person name="Pasha S."/>
            <person name="Rodriguez D."/>
            <person name="Desguerre I."/>
            <person name="Mubaidin A."/>
            <person name="Bertini E."/>
            <person name="Trembath R.C."/>
            <person name="Simonati A."/>
            <person name="Schanen C."/>
            <person name="Johnson C.A."/>
            <person name="Levinson B."/>
            <person name="Woods C.G."/>
            <person name="Wilmot B."/>
            <person name="Kramer P."/>
            <person name="Gitschier J."/>
            <person name="Maher E.R."/>
            <person name="Hayflick S.J."/>
        </authorList>
    </citation>
    <scope>VARIANTS NBIA2B THR-545; TRP-632 AND VAL-691 DEL</scope>
    <scope>VARIANTS NBIA2A GLU-310; THR-341; CYS-517; ARG-638; TRP-741 AND 790-TYR--PRO-806 DEL</scope>
</reference>
<reference key="19">
    <citation type="journal article" date="2006" name="Nat. Genet.">
        <authorList>
            <person name="Morgan N.V."/>
            <person name="Westaway S.K."/>
            <person name="Morton J.E."/>
            <person name="Gregory A."/>
            <person name="Gissen P."/>
            <person name="Sonek S."/>
            <person name="Cangul H."/>
            <person name="Coryell J."/>
            <person name="Canham N."/>
            <person name="Nardocci N."/>
            <person name="Zorzi G."/>
            <person name="Pasha S."/>
            <person name="Rodriguez D."/>
            <person name="Desguerre I."/>
            <person name="Mubaidin A."/>
            <person name="Bertini E."/>
            <person name="Trembath R.C."/>
            <person name="Simonati A."/>
            <person name="Schanen C."/>
            <person name="Johnson C.A."/>
            <person name="Levinson B."/>
            <person name="Woods C.G."/>
            <person name="Wilmot B."/>
            <person name="Kramer P."/>
            <person name="Gitschier J."/>
            <person name="Maher E.R."/>
            <person name="Hayflick S.J."/>
        </authorList>
    </citation>
    <scope>ERRATUM OF PUBMED:16783378</scope>
</reference>
<reference key="20">
    <citation type="journal article" date="2009" name="Ann. Neurol.">
        <title>Characterization of PLA2G6 as a locus for dystonia-parkinsonism.</title>
        <authorList>
            <person name="Paisan-Ruiz C."/>
            <person name="Bhatia K.P."/>
            <person name="Li A."/>
            <person name="Hernandez D."/>
            <person name="Davis M."/>
            <person name="Wood N.W."/>
            <person name="Hardy J."/>
            <person name="Houlden H."/>
            <person name="Singleton A."/>
            <person name="Schneider S.A."/>
        </authorList>
    </citation>
    <scope>VARIANTS PARK14 GLN-741 AND TRP-747</scope>
</reference>
<reference key="21">
    <citation type="journal article" date="2013" name="J. Med. Genet.">
        <title>Recessive truncating NALCN mutation in infantile neuroaxonal dystrophy with facial dysmorphism.</title>
        <authorList>
            <person name="Koeroglu C."/>
            <person name="Seven M."/>
            <person name="Tolun A."/>
        </authorList>
    </citation>
    <scope>VARIANTS NBIA2A GLY-484 AND MET-661</scope>
</reference>
<reference key="22">
    <citation type="journal article" date="2017" name="Hum. Mutat.">
        <title>Mutations in KARS cause early-onset hearing loss and leukoencephalopathy: Potential pathogenic mechanism.</title>
        <authorList>
            <person name="Zhou X.L."/>
            <person name="He L.X."/>
            <person name="Yu L.J."/>
            <person name="Wang Y."/>
            <person name="Wang X.J."/>
            <person name="Wang E.D."/>
            <person name="Yang T."/>
        </authorList>
    </citation>
    <scope>VARIANT TRP-550</scope>
</reference>
<comment type="function">
    <text evidence="1 2 3 6 7 10 12 13 16">Calcium-independent phospholipase involved in phospholipid remodeling with implications in cellular membrane homeostasis, mitochondrial integrity and signal transduction. Hydrolyzes the ester bond of the fatty acyl group attached at sn-1 or sn-2 position of phospholipids (phospholipase A1 and A2 activity respectively), producing lysophospholipids that are used in deacylation-reacylation cycles (PubMed:10092647, PubMed:10336645, PubMed:20886109, PubMed:9417066). Hydrolyzes both saturated and unsaturated long fatty acyl chains in various glycerophospholipid classes such as phosphatidylcholines, phosphatidylethanolamines and phosphatidates, with a preference for hydrolysis at sn-2 position (PubMed:10092647, PubMed:10336645, PubMed:20886109). Can further hydrolyze lysophospholipids carrying saturated fatty acyl chains (lysophospholipase activity) (PubMed:20886109). Upon oxidative stress, contributes to remodeling of mitochondrial phospholipids in pancreatic beta cells, in a repair mechanism to reduce oxidized lipid content (PubMed:23533611). Preferentially hydrolyzes oxidized polyunsaturated fatty acyl chains from cardiolipins, yielding monolysocardiolipins that can be reacylated with unoxidized fatty acyls to regenerate native cardiolipin species (By similarity). Hydrolyzes oxidized glycerophosphoethanolamines present in pancreatic islets, releasing oxidized polyunsaturated fatty acids such as hydroxyeicosatetraenoates (HETEs) (By similarity). Has thioesterase activity toward fatty-acyl CoA releasing CoA-SH known to facilitate fatty acid transport and beta-oxidation in mitochondria particularly in skeletal muscle (PubMed:20886109). Plays a role in regulation of membrane dynamics and homeostasis. Selectively hydrolyzes sn-2 arachidonoyl group in plasmalogen phospholipids, structural components of lipid rafts and myelin (By similarity). Regulates F-actin polymerization at the pseudopods, which is required for both speed and directionality of MCP1/CCL2-induced monocyte chemotaxis (PubMed:18208975). Targets membrane phospholipids to produce potent lipid signaling messengers. Generates lysophosphatidate (LPA, 1-acyl-glycerol-3-phosphate), which acts via G-protein receptors in various cell types (By similarity). Has phospholipase A2 activity toward platelet-activating factor (PAF, 1-O-alkyl-2-acetyl-sn-glycero-3-phosphocholine), likely playing a role in inactivation of this potent pro-inflammatory signaling lipid (By similarity). In response to glucose, amplifies calcium influx in pancreatic beta cells to promote INS secretion (By similarity).</text>
</comment>
<comment type="function">
    <molecule>Isoform Ankyrin-iPLA2-1</molecule>
    <text evidence="16">Lacks the catalytic domain and may act as a negative regulator of the catalytically active isoforms.</text>
</comment>
<comment type="function">
    <molecule>Isoform Ankyrin-iPLA2-2</molecule>
    <text evidence="16">Lacks the catalytic domain and may act as a negative regulator of the catalytically active isoforms.</text>
</comment>
<comment type="catalytic activity">
    <reaction evidence="12">
        <text>a 1,2-diacyl-sn-glycero-3-phosphocholine + H2O = a 1-acyl-sn-glycero-3-phosphocholine + a fatty acid + H(+)</text>
        <dbReference type="Rhea" id="RHEA:15801"/>
        <dbReference type="ChEBI" id="CHEBI:15377"/>
        <dbReference type="ChEBI" id="CHEBI:15378"/>
        <dbReference type="ChEBI" id="CHEBI:28868"/>
        <dbReference type="ChEBI" id="CHEBI:57643"/>
        <dbReference type="ChEBI" id="CHEBI:58168"/>
        <dbReference type="EC" id="3.1.1.4"/>
    </reaction>
    <physiologicalReaction direction="left-to-right" evidence="23">
        <dbReference type="Rhea" id="RHEA:15802"/>
    </physiologicalReaction>
</comment>
<comment type="catalytic activity">
    <reaction evidence="1">
        <text>a 1-O-alkyl-2-acyl-sn-glycero-3-phosphocholine + H2O = a 1-O-alkyl-sn-glycero-3-phosphocholine + a fatty acid + H(+)</text>
        <dbReference type="Rhea" id="RHEA:36231"/>
        <dbReference type="ChEBI" id="CHEBI:15377"/>
        <dbReference type="ChEBI" id="CHEBI:15378"/>
        <dbReference type="ChEBI" id="CHEBI:28868"/>
        <dbReference type="ChEBI" id="CHEBI:30909"/>
        <dbReference type="ChEBI" id="CHEBI:36702"/>
        <dbReference type="EC" id="3.1.1.4"/>
    </reaction>
    <physiologicalReaction direction="left-to-right" evidence="1">
        <dbReference type="Rhea" id="RHEA:36232"/>
    </physiologicalReaction>
</comment>
<comment type="catalytic activity">
    <reaction evidence="1">
        <text>1,2-dihexadecanoyl-sn-glycero-3-phosphocholine + H2O = 1-hexadecanoyl-sn-glycero-3-phosphocholine + hexadecanoate + H(+)</text>
        <dbReference type="Rhea" id="RHEA:41223"/>
        <dbReference type="ChEBI" id="CHEBI:7896"/>
        <dbReference type="ChEBI" id="CHEBI:15377"/>
        <dbReference type="ChEBI" id="CHEBI:15378"/>
        <dbReference type="ChEBI" id="CHEBI:72998"/>
        <dbReference type="ChEBI" id="CHEBI:72999"/>
    </reaction>
    <physiologicalReaction direction="left-to-right" evidence="1">
        <dbReference type="Rhea" id="RHEA:41224"/>
    </physiologicalReaction>
</comment>
<comment type="catalytic activity">
    <reaction evidence="12">
        <text>1-hexadecanoyl-2-(9Z-octadecenoyl)-sn-glycero-3-phosphocholine + H2O = 1-hexadecanoyl-sn-glycero-3-phosphocholine + (9Z)-octadecenoate + H(+)</text>
        <dbReference type="Rhea" id="RHEA:38779"/>
        <dbReference type="ChEBI" id="CHEBI:15377"/>
        <dbReference type="ChEBI" id="CHEBI:15378"/>
        <dbReference type="ChEBI" id="CHEBI:30823"/>
        <dbReference type="ChEBI" id="CHEBI:72998"/>
        <dbReference type="ChEBI" id="CHEBI:73001"/>
    </reaction>
    <physiologicalReaction direction="left-to-right" evidence="23">
        <dbReference type="Rhea" id="RHEA:38780"/>
    </physiologicalReaction>
</comment>
<comment type="catalytic activity">
    <reaction evidence="1 3">
        <text>1-hexadecanoyl-2-(9Z,12Z-octadecadienoyl)-sn-glycero-3-phosphocholine + H2O = (9Z,12Z)-octadecadienoate + 1-hexadecanoyl-sn-glycero-3-phosphocholine + H(+)</text>
        <dbReference type="Rhea" id="RHEA:40811"/>
        <dbReference type="ChEBI" id="CHEBI:15377"/>
        <dbReference type="ChEBI" id="CHEBI:15378"/>
        <dbReference type="ChEBI" id="CHEBI:30245"/>
        <dbReference type="ChEBI" id="CHEBI:72998"/>
        <dbReference type="ChEBI" id="CHEBI:73002"/>
    </reaction>
    <physiologicalReaction direction="left-to-right" evidence="1 3">
        <dbReference type="Rhea" id="RHEA:40812"/>
    </physiologicalReaction>
</comment>
<comment type="catalytic activity">
    <reaction evidence="6 13">
        <text>1-hexadecanoyl-2-(5Z,8Z,11Z,14Z-eicosatetraenoyl)-sn-glycero-3-phosphocholine + H2O = 1-hexadecanoyl-sn-glycero-3-phosphocholine + (5Z,8Z,11Z,14Z)-eicosatetraenoate + H(+)</text>
        <dbReference type="Rhea" id="RHEA:40427"/>
        <dbReference type="ChEBI" id="CHEBI:15377"/>
        <dbReference type="ChEBI" id="CHEBI:15378"/>
        <dbReference type="ChEBI" id="CHEBI:32395"/>
        <dbReference type="ChEBI" id="CHEBI:72998"/>
        <dbReference type="ChEBI" id="CHEBI:73003"/>
    </reaction>
    <physiologicalReaction direction="left-to-right" evidence="22 24">
        <dbReference type="Rhea" id="RHEA:40428"/>
    </physiologicalReaction>
</comment>
<comment type="catalytic activity">
    <reaction evidence="1">
        <text>1-octadecanoyl-2-(5Z,8Z,11Z,14Z-eicosatetraenoyl)-sn-glycero-3-phosphocholine + H2O = 1-octadecanoyl-sn-glycero-3-phosphocholine + (5Z,8Z,11Z,14Z)-eicosatetraenoate + H(+)</text>
        <dbReference type="Rhea" id="RHEA:40519"/>
        <dbReference type="ChEBI" id="CHEBI:15377"/>
        <dbReference type="ChEBI" id="CHEBI:15378"/>
        <dbReference type="ChEBI" id="CHEBI:32395"/>
        <dbReference type="ChEBI" id="CHEBI:73858"/>
        <dbReference type="ChEBI" id="CHEBI:74965"/>
    </reaction>
    <physiologicalReaction direction="left-to-right" evidence="1">
        <dbReference type="Rhea" id="RHEA:40520"/>
    </physiologicalReaction>
</comment>
<comment type="catalytic activity">
    <reaction evidence="1 3">
        <text>1-hexadecanoyl-2-(5Z,8Z,11Z,14Z-eicosatetraenoyl)-sn-glycero-3-phosphoethanolamine + H2O = 1-hexadecanoyl-sn-glycero-3-phosphoethanolamine + (5Z,8Z,11Z,14Z)-eicosatetraenoate + H(+)</text>
        <dbReference type="Rhea" id="RHEA:40431"/>
        <dbReference type="ChEBI" id="CHEBI:15377"/>
        <dbReference type="ChEBI" id="CHEBI:15378"/>
        <dbReference type="ChEBI" id="CHEBI:32395"/>
        <dbReference type="ChEBI" id="CHEBI:73004"/>
        <dbReference type="ChEBI" id="CHEBI:73009"/>
    </reaction>
    <physiologicalReaction direction="left-to-right" evidence="1 3">
        <dbReference type="Rhea" id="RHEA:40432"/>
    </physiologicalReaction>
</comment>
<comment type="catalytic activity">
    <reaction evidence="1">
        <text>1,2-dihexadecanoyl-sn-glycero-3-phosphate + H2O = 1-hexadecanoyl-sn-glycero-3-phosphate + hexadecanoate + H(+)</text>
        <dbReference type="Rhea" id="RHEA:63304"/>
        <dbReference type="ChEBI" id="CHEBI:7896"/>
        <dbReference type="ChEBI" id="CHEBI:15377"/>
        <dbReference type="ChEBI" id="CHEBI:15378"/>
        <dbReference type="ChEBI" id="CHEBI:57518"/>
        <dbReference type="ChEBI" id="CHEBI:72859"/>
    </reaction>
    <physiologicalReaction direction="left-to-right" evidence="1">
        <dbReference type="Rhea" id="RHEA:63305"/>
    </physiologicalReaction>
</comment>
<comment type="catalytic activity">
    <reaction evidence="12">
        <text>a 1-acyl-sn-glycero-3-phosphocholine + H2O = sn-glycerol 3-phosphocholine + a fatty acid + H(+)</text>
        <dbReference type="Rhea" id="RHEA:15177"/>
        <dbReference type="ChEBI" id="CHEBI:15377"/>
        <dbReference type="ChEBI" id="CHEBI:15378"/>
        <dbReference type="ChEBI" id="CHEBI:16870"/>
        <dbReference type="ChEBI" id="CHEBI:28868"/>
        <dbReference type="ChEBI" id="CHEBI:58168"/>
        <dbReference type="EC" id="3.1.1.5"/>
    </reaction>
    <physiologicalReaction direction="left-to-right" evidence="23">
        <dbReference type="Rhea" id="RHEA:15178"/>
    </physiologicalReaction>
</comment>
<comment type="catalytic activity">
    <reaction evidence="12">
        <text>1-hexadecanoyl-sn-glycero-3-phosphocholine + H2O = sn-glycerol 3-phosphocholine + hexadecanoate + H(+)</text>
        <dbReference type="Rhea" id="RHEA:40435"/>
        <dbReference type="ChEBI" id="CHEBI:7896"/>
        <dbReference type="ChEBI" id="CHEBI:15377"/>
        <dbReference type="ChEBI" id="CHEBI:15378"/>
        <dbReference type="ChEBI" id="CHEBI:16870"/>
        <dbReference type="ChEBI" id="CHEBI:72998"/>
    </reaction>
    <physiologicalReaction direction="left-to-right" evidence="23">
        <dbReference type="Rhea" id="RHEA:40436"/>
    </physiologicalReaction>
</comment>
<comment type="catalytic activity">
    <reaction evidence="1">
        <text>1-(5Z,8Z,11Z,14Z-eicosatetraenoyl)-sn-glycero-3-phosphocholine + H2O = sn-glycerol 3-phosphocholine + (5Z,8Z,11Z,14Z)-eicosatetraenoate + H(+)</text>
        <dbReference type="Rhea" id="RHEA:40831"/>
        <dbReference type="ChEBI" id="CHEBI:15377"/>
        <dbReference type="ChEBI" id="CHEBI:15378"/>
        <dbReference type="ChEBI" id="CHEBI:16870"/>
        <dbReference type="ChEBI" id="CHEBI:32395"/>
        <dbReference type="ChEBI" id="CHEBI:74344"/>
    </reaction>
    <physiologicalReaction direction="left-to-right" evidence="1">
        <dbReference type="Rhea" id="RHEA:40832"/>
    </physiologicalReaction>
</comment>
<comment type="catalytic activity">
    <reaction evidence="1">
        <text>2-(5Z,8Z,11Z,14Z)-eicosatetraenoyl-sn-glycero-3-phosphocholine + H2O = sn-glycerol 3-phosphocholine + (5Z,8Z,11Z,14Z)-eicosatetraenoate + H(+)</text>
        <dbReference type="Rhea" id="RHEA:40827"/>
        <dbReference type="ChEBI" id="CHEBI:15377"/>
        <dbReference type="ChEBI" id="CHEBI:15378"/>
        <dbReference type="ChEBI" id="CHEBI:16870"/>
        <dbReference type="ChEBI" id="CHEBI:32395"/>
        <dbReference type="ChEBI" id="CHEBI:76079"/>
    </reaction>
    <physiologicalReaction direction="left-to-right" evidence="1">
        <dbReference type="Rhea" id="RHEA:40828"/>
    </physiologicalReaction>
</comment>
<comment type="catalytic activity">
    <reaction evidence="1">
        <text>1-O-hexadecyl-2-(5Z,8Z,11Z,14Z)-eicosatetraenoyl-sn-glycero-3-phosphocholine + H2O = 1-O-hexadecyl-sn-glycero-3-phosphocholine + (5Z,8Z,11Z,14Z)-eicosatetraenoate + H(+)</text>
        <dbReference type="Rhea" id="RHEA:41067"/>
        <dbReference type="ChEBI" id="CHEBI:15377"/>
        <dbReference type="ChEBI" id="CHEBI:15378"/>
        <dbReference type="ChEBI" id="CHEBI:32395"/>
        <dbReference type="ChEBI" id="CHEBI:55430"/>
        <dbReference type="ChEBI" id="CHEBI:64496"/>
    </reaction>
    <physiologicalReaction direction="left-to-right" evidence="1">
        <dbReference type="Rhea" id="RHEA:41068"/>
    </physiologicalReaction>
</comment>
<comment type="catalytic activity">
    <reaction evidence="1">
        <text>1-O-hexadecyl-2-acetyl-sn-glycero-3-phosphocholine + H2O = 1-O-hexadecyl-sn-glycero-3-phosphocholine + acetate + H(+)</text>
        <dbReference type="Rhea" id="RHEA:40479"/>
        <dbReference type="ChEBI" id="CHEBI:15377"/>
        <dbReference type="ChEBI" id="CHEBI:15378"/>
        <dbReference type="ChEBI" id="CHEBI:30089"/>
        <dbReference type="ChEBI" id="CHEBI:44811"/>
        <dbReference type="ChEBI" id="CHEBI:64496"/>
    </reaction>
    <physiologicalReaction direction="left-to-right" evidence="1">
        <dbReference type="Rhea" id="RHEA:40480"/>
    </physiologicalReaction>
</comment>
<comment type="catalytic activity">
    <reaction evidence="12">
        <text>hexadecanoyl-CoA + H2O = hexadecanoate + CoA + H(+)</text>
        <dbReference type="Rhea" id="RHEA:16645"/>
        <dbReference type="ChEBI" id="CHEBI:7896"/>
        <dbReference type="ChEBI" id="CHEBI:15377"/>
        <dbReference type="ChEBI" id="CHEBI:15378"/>
        <dbReference type="ChEBI" id="CHEBI:57287"/>
        <dbReference type="ChEBI" id="CHEBI:57379"/>
        <dbReference type="EC" id="3.1.2.2"/>
    </reaction>
    <physiologicalReaction direction="left-to-right" evidence="23">
        <dbReference type="Rhea" id="RHEA:16646"/>
    </physiologicalReaction>
</comment>
<comment type="catalytic activity">
    <reaction evidence="13">
        <text>1',3'-bis[1,2-di-(9Z-octadecenoyl)-sn-glycero-3-phospho]-glycerol + H2O = 1'-[1,2-di-(9Z-octadecenoyl)-sn-glycero-3-phospho]-3'-[1-(9Z-octadecenoyl)-sn-glycero-3-phospho]-glycerol + (9Z)-octadecenoate + H(+)</text>
        <dbReference type="Rhea" id="RHEA:40463"/>
        <dbReference type="ChEBI" id="CHEBI:15377"/>
        <dbReference type="ChEBI" id="CHEBI:15378"/>
        <dbReference type="ChEBI" id="CHEBI:30823"/>
        <dbReference type="ChEBI" id="CHEBI:77253"/>
        <dbReference type="ChEBI" id="CHEBI:77259"/>
    </reaction>
    <physiologicalReaction direction="left-to-right" evidence="24">
        <dbReference type="Rhea" id="RHEA:40464"/>
    </physiologicalReaction>
</comment>
<comment type="catalytic activity">
    <reaction evidence="13">
        <text>1'-[1,2-di-(9Z-octadecenoyl)-sn-glycero-3-phospho]-3'-[1-(9Z-octadecenoyl)-sn-glycero-3-phospho]-glycerol + H2O = 1',3'-bis-[1-(9Z-octadecenoyl)-sn-glycero-3-phospho]-glycerol + (9Z)-octadecenoate + H(+)</text>
        <dbReference type="Rhea" id="RHEA:40467"/>
        <dbReference type="ChEBI" id="CHEBI:15377"/>
        <dbReference type="ChEBI" id="CHEBI:15378"/>
        <dbReference type="ChEBI" id="CHEBI:30823"/>
        <dbReference type="ChEBI" id="CHEBI:77256"/>
        <dbReference type="ChEBI" id="CHEBI:77259"/>
    </reaction>
    <physiologicalReaction direction="left-to-right" evidence="24">
        <dbReference type="Rhea" id="RHEA:40468"/>
    </physiologicalReaction>
</comment>
<comment type="catalytic activity">
    <reaction evidence="3">
        <text>1',3'-bis-[1,2-di-(9Z,12Z-octadecadienoyl)-sn-glycero-3-phospho]-glycerol + H2O = 1'-[1,2-di-(9Z,12Z-octadecadienoyl)-sn-glycero-3-phospho]-3'-[1-(9Z,12Z-octadecadienoyl)-sn-glycero-3-phospho]-glycerol + (9Z,12Z)-octadecadienoate + H(+)</text>
        <dbReference type="Rhea" id="RHEA:52812"/>
        <dbReference type="ChEBI" id="CHEBI:15377"/>
        <dbReference type="ChEBI" id="CHEBI:15378"/>
        <dbReference type="ChEBI" id="CHEBI:30245"/>
        <dbReference type="ChEBI" id="CHEBI:83580"/>
        <dbReference type="ChEBI" id="CHEBI:83581"/>
    </reaction>
    <physiologicalReaction direction="right-to-left" evidence="3">
        <dbReference type="Rhea" id="RHEA:52814"/>
    </physiologicalReaction>
</comment>
<comment type="catalytic activity">
    <reaction evidence="2">
        <text>1-octadecanoyl-2-(15-hydroxy-(5Z,8Z,11Z,13E)-eicosatetraenoyl)-sn-glycero-3-phosphoethanolamine + H2O = 1-octadecanoyl-sn-glycero-3-phosphoethanolamine + 15-hydroxy-(5Z,8Z,11Z,13E)-eicosatetraenoate + H(+)</text>
        <dbReference type="Rhea" id="RHEA:63256"/>
        <dbReference type="ChEBI" id="CHEBI:15377"/>
        <dbReference type="ChEBI" id="CHEBI:15378"/>
        <dbReference type="ChEBI" id="CHEBI:75036"/>
        <dbReference type="ChEBI" id="CHEBI:78832"/>
        <dbReference type="ChEBI" id="CHEBI:146277"/>
    </reaction>
    <physiologicalReaction direction="left-to-right" evidence="2">
        <dbReference type="Rhea" id="RHEA:63257"/>
    </physiologicalReaction>
</comment>
<comment type="activity regulation">
    <text evidence="2 6">Activated by ATP (PubMed:10092647). Inhibited by calcium-activated calmodulin (By similarity). Inhibited by bromoenol lactone (BEL) (By similarity).</text>
</comment>
<comment type="subunit">
    <text evidence="1">Homodimer formed by catalytic domains tightly interacting through a large hydrophobic interface. The contact area involves 3 alpha helices, several loops and a part of the beta sheet from each monomer. Both active sites of the dimer are in close proximity adopting an open conformation that provide sufficient space for phospholipid access and favoring cooperativity in deacylation-reacylation reactions. Each monomer has 9 ankyrin repeats stacked side-by-side in an elongated structure oriented outwards from the catalytic core.</text>
</comment>
<comment type="interaction">
    <interactant intactId="EBI-12089905">
        <id>O60733</id>
    </interactant>
    <interactant intactId="EBI-742887">
        <id>Q8TAP6</id>
        <label>CEP76</label>
    </interactant>
    <organismsDiffer>false</organismsDiffer>
    <experiments>3</experiments>
</comment>
<comment type="interaction">
    <interactant intactId="EBI-12089905">
        <id>O60733</id>
    </interactant>
    <interactant intactId="EBI-10317491">
        <id>Q9NZL9</id>
        <label>MAT2B</label>
    </interactant>
    <organismsDiffer>false</organismsDiffer>
    <experiments>3</experiments>
</comment>
<comment type="interaction">
    <interactant intactId="EBI-12089905">
        <id>O60733</id>
    </interactant>
    <interactant intactId="EBI-1042703">
        <id>Q8N1F7</id>
        <label>NUP93</label>
    </interactant>
    <organismsDiffer>false</organismsDiffer>
    <experiments>3</experiments>
</comment>
<comment type="interaction">
    <interactant intactId="EBI-12089905">
        <id>O60733</id>
    </interactant>
    <interactant intactId="EBI-12089905">
        <id>O60733</id>
        <label>PLA2G6</label>
    </interactant>
    <organismsDiffer>false</organismsDiffer>
    <experiments>3</experiments>
</comment>
<comment type="interaction">
    <interactant intactId="EBI-12089905">
        <id>O60733</id>
    </interactant>
    <interactant intactId="EBI-742404">
        <id>O95199</id>
        <label>RCBTB2</label>
    </interactant>
    <organismsDiffer>false</organismsDiffer>
    <experiments>3</experiments>
</comment>
<comment type="interaction">
    <interactant intactId="EBI-12089905">
        <id>O60733</id>
    </interactant>
    <interactant intactId="EBI-6257312">
        <id>Q9BVN2</id>
        <label>RUSC1</label>
    </interactant>
    <organismsDiffer>false</organismsDiffer>
    <experiments>3</experiments>
</comment>
<comment type="interaction">
    <interactant intactId="EBI-12089905">
        <id>O60733</id>
    </interactant>
    <interactant intactId="EBI-2822051">
        <id>Q14140</id>
        <label>SERTAD2</label>
    </interactant>
    <organismsDiffer>false</organismsDiffer>
    <experiments>3</experiments>
</comment>
<comment type="interaction">
    <interactant intactId="EBI-12089905">
        <id>O60733</id>
    </interactant>
    <interactant intactId="EBI-9867283">
        <id>Q86XT4</id>
        <label>TRIM50</label>
    </interactant>
    <organismsDiffer>false</organismsDiffer>
    <experiments>3</experiments>
</comment>
<comment type="interaction">
    <interactant intactId="EBI-12089905">
        <id>O60733</id>
    </interactant>
    <interactant intactId="EBI-11975223">
        <id>Q70EL1-9</id>
        <label>USP54</label>
    </interactant>
    <organismsDiffer>false</organismsDiffer>
    <experiments>3</experiments>
</comment>
<comment type="interaction">
    <interactant intactId="EBI-12089905">
        <id>O60733</id>
    </interactant>
    <interactant intactId="EBI-12287587">
        <id>B2RXF5</id>
        <label>ZBTB42</label>
    </interactant>
    <organismsDiffer>false</organismsDiffer>
    <experiments>3</experiments>
</comment>
<comment type="subcellular location">
    <subcellularLocation>
        <location evidence="10">Cytoplasm</location>
    </subcellularLocation>
    <subcellularLocation>
        <location evidence="10">Cell membrane</location>
    </subcellularLocation>
    <subcellularLocation>
        <location evidence="3">Mitochondrion</location>
    </subcellularLocation>
    <subcellularLocation>
        <location evidence="10">Cell projection</location>
        <location evidence="10">Pseudopodium</location>
    </subcellularLocation>
    <text evidence="10">Recruited to the membrane-enriched pseudopods upon MCP1/CCL2 stimulation in monocytes.</text>
</comment>
<comment type="alternative products">
    <event type="alternative splicing"/>
    <isoform>
        <id>O60733-1</id>
        <name>LH-iPLA2</name>
        <sequence type="displayed"/>
    </isoform>
    <isoform>
        <id>O60733-2</id>
        <name>SH-iPLA2</name>
        <sequence type="described" ref="VSP_000278"/>
    </isoform>
    <isoform>
        <id>O60733-3</id>
        <name>Ankyrin-iPLA2-1</name>
        <sequence type="described" ref="VSP_000281 VSP_000282"/>
    </isoform>
    <isoform>
        <id>O60733-4</id>
        <name>Ankyrin-iPLA2-2</name>
        <sequence type="described" ref="VSP_000277 VSP_000279 VSP_000280"/>
    </isoform>
</comment>
<comment type="tissue specificity">
    <text>Four different transcripts were found to be expressed in a distinct tissue distribution.</text>
</comment>
<comment type="domain">
    <text evidence="1 2">Has two putative calmodulin binding domains, the 1-9-14 and IQ motifs. One calmodulin molecule interacts with PLA2G6 dimer, likely through 1-9-14 motif on each monomer (By similarity). Binds calmodulin in a calcium-dependent way (By similarity).</text>
</comment>
<comment type="disease" evidence="8">
    <disease id="DI-02043">
        <name>Neurodegeneration with brain iron accumulation 2B</name>
        <acronym>NBIA2B</acronym>
        <description>A neurodegenerative disorder associated with iron accumulation in the brain, primarily in the basal ganglia. It is characterized by progressive extrapyramidal dysfunction leading to rigidity, dystonia, dysarthria and sensorimotor impairment.</description>
        <dbReference type="MIM" id="610217"/>
    </disease>
    <text>The disease is caused by variants affecting the gene represented in this entry.</text>
</comment>
<comment type="disease" evidence="8 9 14">
    <disease id="DI-01819">
        <name>Neurodegeneration with brain iron accumulation 2A</name>
        <acronym>NBIA2A</acronym>
        <description>A neurodegenerative disease characterized by pathologic axonal swelling and spheroid bodies in the central nervous system. Onset is within the first 2 years of life with death by age 10 years.</description>
        <dbReference type="MIM" id="256600"/>
    </disease>
    <text>The disease is caused by variants affecting the gene represented in this entry.</text>
</comment>
<comment type="disease" evidence="11">
    <disease id="DI-02500">
        <name>Parkinson disease 14</name>
        <acronym>PARK14</acronym>
        <description>An adult-onset progressive neurodegenerative disorder characterized by parkinsonism, dystonia, severe cognitive decline, cerebral and cerebellar atrophy and absent iron in the basal ganglia on magnetic resonance imaging.</description>
        <dbReference type="MIM" id="612953"/>
    </disease>
    <text>The disease is caused by variants affecting the gene represented in this entry.</text>
</comment>
<comment type="pharmaceutical">
    <text>Potential target for therapeutic intervention of Barth syndrome.</text>
</comment>
<evidence type="ECO:0000250" key="1">
    <source>
        <dbReference type="UniProtKB" id="A0A3L7I2I8"/>
    </source>
</evidence>
<evidence type="ECO:0000250" key="2">
    <source>
        <dbReference type="UniProtKB" id="P97570"/>
    </source>
</evidence>
<evidence type="ECO:0000250" key="3">
    <source>
        <dbReference type="UniProtKB" id="P97819"/>
    </source>
</evidence>
<evidence type="ECO:0000255" key="4"/>
<evidence type="ECO:0000255" key="5">
    <source>
        <dbReference type="PROSITE-ProRule" id="PRU01161"/>
    </source>
</evidence>
<evidence type="ECO:0000269" key="6">
    <source>
    </source>
</evidence>
<evidence type="ECO:0000269" key="7">
    <source>
    </source>
</evidence>
<evidence type="ECO:0000269" key="8">
    <source>
    </source>
</evidence>
<evidence type="ECO:0000269" key="9">
    <source>
    </source>
</evidence>
<evidence type="ECO:0000269" key="10">
    <source>
    </source>
</evidence>
<evidence type="ECO:0000269" key="11">
    <source>
    </source>
</evidence>
<evidence type="ECO:0000269" key="12">
    <source>
    </source>
</evidence>
<evidence type="ECO:0000269" key="13">
    <source>
    </source>
</evidence>
<evidence type="ECO:0000269" key="14">
    <source>
    </source>
</evidence>
<evidence type="ECO:0000269" key="15">
    <source>
    </source>
</evidence>
<evidence type="ECO:0000269" key="16">
    <source>
    </source>
</evidence>
<evidence type="ECO:0000269" key="17">
    <source ref="6"/>
</evidence>
<evidence type="ECO:0000303" key="18">
    <source>
    </source>
</evidence>
<evidence type="ECO:0000303" key="19">
    <source>
    </source>
</evidence>
<evidence type="ECO:0000303" key="20">
    <source>
    </source>
</evidence>
<evidence type="ECO:0000305" key="21"/>
<evidence type="ECO:0000305" key="22">
    <source>
    </source>
</evidence>
<evidence type="ECO:0000305" key="23">
    <source>
    </source>
</evidence>
<evidence type="ECO:0000305" key="24">
    <source>
    </source>
</evidence>
<feature type="chain" id="PRO_0000067037" description="85/88 kDa calcium-independent phospholipase A2">
    <location>
        <begin position="1"/>
        <end position="806"/>
    </location>
</feature>
<feature type="transmembrane region" description="Helical" evidence="4">
    <location>
        <begin position="480"/>
        <end position="500"/>
    </location>
</feature>
<feature type="transmembrane region" description="Helical" evidence="4">
    <location>
        <begin position="511"/>
        <end position="531"/>
    </location>
</feature>
<feature type="repeat" description="ANK 1" evidence="1">
    <location>
        <begin position="120"/>
        <end position="147"/>
    </location>
</feature>
<feature type="repeat" description="ANK 1" evidence="4">
    <location>
        <begin position="151"/>
        <end position="181"/>
    </location>
</feature>
<feature type="repeat" description="ANK 2" evidence="4">
    <location>
        <begin position="185"/>
        <end position="215"/>
    </location>
</feature>
<feature type="repeat" description="ANK 3" evidence="4">
    <location>
        <begin position="219"/>
        <end position="248"/>
    </location>
</feature>
<feature type="repeat" description="ANK 4" evidence="4">
    <location>
        <begin position="251"/>
        <end position="281"/>
    </location>
</feature>
<feature type="repeat" description="ANK 5" evidence="4">
    <location>
        <begin position="286"/>
        <end position="312"/>
    </location>
</feature>
<feature type="repeat" description="ANK 6" evidence="4">
    <location>
        <begin position="316"/>
        <end position="345"/>
    </location>
</feature>
<feature type="repeat" description="ANK 7" evidence="4">
    <location>
        <begin position="349"/>
        <end position="378"/>
    </location>
</feature>
<feature type="repeat" description="ANK 9" evidence="1">
    <location>
        <begin position="382"/>
        <end position="403"/>
    </location>
</feature>
<feature type="domain" description="PNPLA" evidence="5">
    <location>
        <begin position="481"/>
        <end position="665"/>
    </location>
</feature>
<feature type="region of interest" description="Calmodulin-binding (1-9-14 motif)" evidence="1">
    <location>
        <begin position="677"/>
        <end position="686"/>
    </location>
</feature>
<feature type="region of interest" description="Calmodulin-binding (IQ motif)" evidence="1">
    <location>
        <begin position="748"/>
        <end position="759"/>
    </location>
</feature>
<feature type="short sequence motif" description="GXGXXG" evidence="5">
    <location>
        <begin position="485"/>
        <end position="490"/>
    </location>
</feature>
<feature type="short sequence motif" description="GXSXG" evidence="5">
    <location>
        <begin position="517"/>
        <end position="521"/>
    </location>
</feature>
<feature type="short sequence motif" description="DGA/G" evidence="5">
    <location>
        <begin position="652"/>
        <end position="654"/>
    </location>
</feature>
<feature type="active site" description="Nucleophile" evidence="5">
    <location>
        <position position="519"/>
    </location>
</feature>
<feature type="active site" description="Proton acceptor" evidence="5">
    <location>
        <position position="652"/>
    </location>
</feature>
<feature type="splice variant" id="VSP_000277" description="In isoform Ankyrin-iPLA2-2." evidence="20">
    <location>
        <begin position="71"/>
        <end position="142"/>
    </location>
</feature>
<feature type="splice variant" id="VSP_000278" description="In isoform SH-iPLA2." evidence="18 19">
    <original>LVTRKAILTLLRTVGAEYCFPPIHGVPAEQGSAAPHHPFSLERAQPPPISLNNLE</original>
    <variation>Q</variation>
    <location>
        <begin position="396"/>
        <end position="450"/>
    </location>
</feature>
<feature type="splice variant" id="VSP_000279" description="In isoform Ankyrin-iPLA2-2." evidence="20">
    <original>ELQDLMHISRARKPAFILGSMRDEKRTHDHLLCLDGGGVKGLIIIQLLIA</original>
    <variation>GSHPSQAGWWAWGAVSDGTTGSHAHLTGPEASVHPGLHEGREADMQNLSP</variation>
    <location>
        <begin position="450"/>
        <end position="499"/>
    </location>
</feature>
<feature type="splice variant" id="VSP_000281" description="In isoform Ankyrin-iPLA2-1." evidence="20">
    <original>HDH</original>
    <variation>CRT</variation>
    <location>
        <begin position="477"/>
        <end position="479"/>
    </location>
</feature>
<feature type="splice variant" id="VSP_000282" description="In isoform Ankyrin-iPLA2-1." evidence="20">
    <location>
        <begin position="480"/>
        <end position="806"/>
    </location>
</feature>
<feature type="splice variant" id="VSP_000280" description="In isoform Ankyrin-iPLA2-2." evidence="20">
    <location>
        <begin position="500"/>
        <end position="806"/>
    </location>
</feature>
<feature type="sequence variant" id="VAR_018961" description="In dbSNP:rs11570605." evidence="17">
    <original>V</original>
    <variation>I</variation>
    <location>
        <position position="58"/>
    </location>
</feature>
<feature type="sequence variant" id="VAR_018962" description="In dbSNP:rs11570606." evidence="17">
    <original>R</original>
    <variation>G</variation>
    <location>
        <position position="63"/>
    </location>
</feature>
<feature type="sequence variant" id="VAR_018963" description="In dbSNP:rs11570607." evidence="17">
    <original>R</original>
    <variation>Q</variation>
    <location>
        <position position="70"/>
    </location>
</feature>
<feature type="sequence variant" id="VAR_018964" description="In dbSNP:rs11570646." evidence="17">
    <original>D</original>
    <variation>N</variation>
    <location>
        <position position="183"/>
    </location>
</feature>
<feature type="sequence variant" id="VAR_029371" description="In NBIA2A; dbSNP:rs121908682." evidence="8">
    <original>V</original>
    <variation>E</variation>
    <location>
        <position position="310"/>
    </location>
</feature>
<feature type="sequence variant" id="VAR_083527" description="In NBIA2A; complete loss of phospholipase and lysophospholipase activities." evidence="8 12">
    <original>A</original>
    <variation>T</variation>
    <location>
        <position position="341"/>
    </location>
</feature>
<feature type="sequence variant" id="VAR_018965" description="In dbSNP:rs11570680." evidence="17">
    <original>A</original>
    <variation>T</variation>
    <location>
        <position position="343"/>
    </location>
</feature>
<feature type="sequence variant" id="VAR_070600" description="In NBIA2A." evidence="14">
    <original>D</original>
    <variation>G</variation>
    <location>
        <position position="484"/>
    </location>
</feature>
<feature type="sequence variant" id="VAR_083528" description="In NBIA2A; complete loss of phospholipase and lysophospholipase activities." evidence="8 12">
    <original>G</original>
    <variation>C</variation>
    <location>
        <position position="517"/>
    </location>
</feature>
<feature type="sequence variant" id="VAR_029372" description="In NBIA2B; dbSNP:rs121908681." evidence="8">
    <original>K</original>
    <variation>T</variation>
    <location>
        <position position="545"/>
    </location>
</feature>
<feature type="sequence variant" id="VAR_079753" description="In dbSNP:rs1004616610." evidence="15">
    <original>R</original>
    <variation>W</variation>
    <location>
        <position position="550"/>
    </location>
</feature>
<feature type="sequence variant" id="VAR_029373" description="In NBIA2B; increases phospholipase, lysophospholipase and thioesterase activities; dbSNP:rs121908683." evidence="8 12">
    <original>R</original>
    <variation>W</variation>
    <location>
        <position position="632"/>
    </location>
</feature>
<feature type="sequence variant" id="VAR_083529" description="In NBIA2A; complete loss of phospholipase and lysophospholipase activities." evidence="8 12">
    <original>G</original>
    <variation>R</variation>
    <location>
        <position position="638"/>
    </location>
</feature>
<feature type="sequence variant" id="VAR_070601" description="In NBIA2A; dbSNP:rs767689496." evidence="14">
    <original>T</original>
    <variation>M</variation>
    <location>
        <position position="661"/>
    </location>
</feature>
<feature type="sequence variant" id="VAR_029374" description="In NBIA2A and NBIA2B; significantly reduces phospholipase and lysophospholipase activities." evidence="8 9 12">
    <location>
        <position position="691"/>
    </location>
</feature>
<feature type="sequence variant" id="VAR_062530" description="In PARK14; has no effect on phospholipase, lysophospholipase and thioesterase activities; dbSNP:rs121908686." evidence="11 12">
    <original>R</original>
    <variation>Q</variation>
    <location>
        <position position="741"/>
    </location>
</feature>
<feature type="sequence variant" id="VAR_083530" description="In NBIA2A; significantly reduces phospholipase and lysophospholipase activities." evidence="8 12">
    <original>R</original>
    <variation>W</variation>
    <location>
        <position position="741"/>
    </location>
</feature>
<feature type="sequence variant" id="VAR_062531" description="In PARK14; has no effect on phospholipase, lysophospholipase and thioesterase activities; dbSNP:rs121908687." evidence="11 12">
    <original>R</original>
    <variation>W</variation>
    <location>
        <position position="747"/>
    </location>
</feature>
<feature type="sequence variant" id="VAR_037903" description="In dbSNP:rs34184838.">
    <original>S</original>
    <variation>T</variation>
    <location>
        <position position="774"/>
    </location>
</feature>
<feature type="sequence variant" id="VAR_083531" description="In NBIA2A; complete loss of phospholipase and lysophospholipase activities." evidence="8 12">
    <location>
        <begin position="790"/>
        <end position="806"/>
    </location>
</feature>
<feature type="mutagenesis site" description="Abolishes phospholipase and lysophospholipase activities." evidence="12">
    <original>S</original>
    <variation>A</variation>
    <location>
        <position position="519"/>
    </location>
</feature>
<feature type="sequence conflict" description="In Ref. 3; AAD30424." evidence="21" ref="3">
    <original>F</original>
    <variation>S</variation>
    <location>
        <position position="11"/>
    </location>
</feature>
<feature type="sequence conflict" description="In Ref. 2; AAD41722/AAD41723." evidence="21" ref="2">
    <original>N</original>
    <variation>D</variation>
    <location>
        <position position="64"/>
    </location>
</feature>
<feature type="sequence conflict" description="In Ref. 3; AAD30424." evidence="21" ref="3">
    <original>K</original>
    <variation>I</variation>
    <location>
        <position position="579"/>
    </location>
</feature>
<feature type="sequence conflict" description="In Ref. 3; AAD30424." evidence="21" ref="3">
    <original>K</original>
    <variation>I</variation>
    <location>
        <position position="686"/>
    </location>
</feature>
<feature type="sequence conflict" description="In Ref. 1; AAC97486." evidence="21" ref="1">
    <original>Q</original>
    <variation>H</variation>
    <location>
        <position position="801"/>
    </location>
</feature>
<sequence>MQFFGRLVNTFSGVTNLFSNPFRVKEVAVADYTSSDRVREEGQLILFQNTPNRTWDCVLVNPRNSQSGFRLFQLELEADALVNFHQYSSQLLPFYESSPQVLHTEVLQHLTDLIRNHPSWSVAHLAVELGIRECFHHSRIISCANCAENEEGCTPLHLACRKGDGEILVELVQYCHTQMDVTDYKGETVFHYAVQGDNSQVLQLLGRNAVAGLNQVNNQGLTPLHLACQLGKQEMVRVLLLCNARCNIMGPNGYPIHSAMKFSQKGCAEMIISMDSSQIHSKDPRYGASPLHWAKNAEMARMLLKRGCNVNSTSSAGNTALHVAVMRNRFDCAIVLLTHGANADARGEHGNTPLHLAMSKDNVEMIKALIVFGAEVDTPNDFGETPTFLASKIGRLVTRKAILTLLRTVGAEYCFPPIHGVPAEQGSAAPHHPFSLERAQPPPISLNNLELQDLMHISRARKPAFILGSMRDEKRTHDHLLCLDGGGVKGLIIIQLLIAIEKASGVATKDLFDWVAGTSTGGILALAILHSKSMAYMRGMYFRMKDEVFRGSRPYESGPLEEFLKREFGEHTKMTDVRKPKVMLTGTLSDRQPAELHLFRNYDAPETVREPRFNQNVNLRPPAQPSDQLVWRAARSSGAAPTYFRPNGRFLDGGLLANNPTLDAMTEIHEYNQDLIRKGQANKVKKLSIVVSLGTGRSPQVPVTCVDVFRPSNPWELAKTVFGAKELGKMVVDCCTDPDGRAVDRARAWCEMVGIQYFRLNPQLGTDIMLDEVSDTVLVNALWETEVYIYEHREEFQKLIQLLLSP</sequence>
<dbReference type="EC" id="3.1.1.4" evidence="12"/>
<dbReference type="EC" id="3.1.1.5" evidence="12"/>
<dbReference type="EC" id="3.1.2.2" evidence="12"/>
<dbReference type="EMBL" id="AF064594">
    <property type="protein sequence ID" value="AAC97486.1"/>
    <property type="molecule type" value="mRNA"/>
</dbReference>
<dbReference type="EMBL" id="AF102988">
    <property type="protein sequence ID" value="AAD41722.1"/>
    <property type="molecule type" value="mRNA"/>
</dbReference>
<dbReference type="EMBL" id="AF102989">
    <property type="protein sequence ID" value="AAD41723.1"/>
    <property type="molecule type" value="mRNA"/>
</dbReference>
<dbReference type="EMBL" id="AF117692">
    <property type="protein sequence ID" value="AAD30424.1"/>
    <property type="molecule type" value="Genomic_DNA"/>
</dbReference>
<dbReference type="EMBL" id="AF117677">
    <property type="protein sequence ID" value="AAD30424.1"/>
    <property type="status" value="JOINED"/>
    <property type="molecule type" value="Genomic_DNA"/>
</dbReference>
<dbReference type="EMBL" id="AF117678">
    <property type="protein sequence ID" value="AAD30424.1"/>
    <property type="status" value="JOINED"/>
    <property type="molecule type" value="Genomic_DNA"/>
</dbReference>
<dbReference type="EMBL" id="AF117679">
    <property type="protein sequence ID" value="AAD30424.1"/>
    <property type="status" value="JOINED"/>
    <property type="molecule type" value="Genomic_DNA"/>
</dbReference>
<dbReference type="EMBL" id="AF117680">
    <property type="protein sequence ID" value="AAD30424.1"/>
    <property type="status" value="JOINED"/>
    <property type="molecule type" value="Genomic_DNA"/>
</dbReference>
<dbReference type="EMBL" id="AF117681">
    <property type="protein sequence ID" value="AAD30424.1"/>
    <property type="status" value="JOINED"/>
    <property type="molecule type" value="Genomic_DNA"/>
</dbReference>
<dbReference type="EMBL" id="AF117682">
    <property type="protein sequence ID" value="AAD30424.1"/>
    <property type="status" value="JOINED"/>
    <property type="molecule type" value="Genomic_DNA"/>
</dbReference>
<dbReference type="EMBL" id="AF117683">
    <property type="protein sequence ID" value="AAD30424.1"/>
    <property type="status" value="JOINED"/>
    <property type="molecule type" value="Genomic_DNA"/>
</dbReference>
<dbReference type="EMBL" id="AF117684">
    <property type="protein sequence ID" value="AAD30424.1"/>
    <property type="status" value="JOINED"/>
    <property type="molecule type" value="Genomic_DNA"/>
</dbReference>
<dbReference type="EMBL" id="AF117685">
    <property type="protein sequence ID" value="AAD30424.1"/>
    <property type="status" value="JOINED"/>
    <property type="molecule type" value="Genomic_DNA"/>
</dbReference>
<dbReference type="EMBL" id="AF117686">
    <property type="protein sequence ID" value="AAD30424.1"/>
    <property type="status" value="JOINED"/>
    <property type="molecule type" value="Genomic_DNA"/>
</dbReference>
<dbReference type="EMBL" id="AF117687">
    <property type="protein sequence ID" value="AAD30424.1"/>
    <property type="status" value="JOINED"/>
    <property type="molecule type" value="Genomic_DNA"/>
</dbReference>
<dbReference type="EMBL" id="AF117688">
    <property type="protein sequence ID" value="AAD30424.1"/>
    <property type="status" value="JOINED"/>
    <property type="molecule type" value="Genomic_DNA"/>
</dbReference>
<dbReference type="EMBL" id="AF117689">
    <property type="protein sequence ID" value="AAD30424.1"/>
    <property type="status" value="JOINED"/>
    <property type="molecule type" value="Genomic_DNA"/>
</dbReference>
<dbReference type="EMBL" id="AF117690">
    <property type="protein sequence ID" value="AAD30424.1"/>
    <property type="status" value="JOINED"/>
    <property type="molecule type" value="Genomic_DNA"/>
</dbReference>
<dbReference type="EMBL" id="AF117691">
    <property type="protein sequence ID" value="AAD30424.1"/>
    <property type="status" value="JOINED"/>
    <property type="molecule type" value="Genomic_DNA"/>
</dbReference>
<dbReference type="EMBL" id="AF116267">
    <property type="protein sequence ID" value="AAF34728.1"/>
    <property type="molecule type" value="Genomic_DNA"/>
</dbReference>
<dbReference type="EMBL" id="AF116252">
    <property type="protein sequence ID" value="AAF34728.1"/>
    <property type="status" value="JOINED"/>
    <property type="molecule type" value="Genomic_DNA"/>
</dbReference>
<dbReference type="EMBL" id="AF116253">
    <property type="protein sequence ID" value="AAF34728.1"/>
    <property type="status" value="JOINED"/>
    <property type="molecule type" value="Genomic_DNA"/>
</dbReference>
<dbReference type="EMBL" id="AF116254">
    <property type="protein sequence ID" value="AAF34728.1"/>
    <property type="status" value="JOINED"/>
    <property type="molecule type" value="Genomic_DNA"/>
</dbReference>
<dbReference type="EMBL" id="AF116255">
    <property type="protein sequence ID" value="AAF34728.1"/>
    <property type="status" value="JOINED"/>
    <property type="molecule type" value="Genomic_DNA"/>
</dbReference>
<dbReference type="EMBL" id="AF116256">
    <property type="protein sequence ID" value="AAF34728.1"/>
    <property type="status" value="JOINED"/>
    <property type="molecule type" value="Genomic_DNA"/>
</dbReference>
<dbReference type="EMBL" id="AF116257">
    <property type="protein sequence ID" value="AAF34728.1"/>
    <property type="status" value="JOINED"/>
    <property type="molecule type" value="Genomic_DNA"/>
</dbReference>
<dbReference type="EMBL" id="AF116258">
    <property type="protein sequence ID" value="AAF34728.1"/>
    <property type="status" value="JOINED"/>
    <property type="molecule type" value="Genomic_DNA"/>
</dbReference>
<dbReference type="EMBL" id="AF116259">
    <property type="protein sequence ID" value="AAF34728.1"/>
    <property type="status" value="JOINED"/>
    <property type="molecule type" value="Genomic_DNA"/>
</dbReference>
<dbReference type="EMBL" id="AF116260">
    <property type="protein sequence ID" value="AAF34728.1"/>
    <property type="status" value="JOINED"/>
    <property type="molecule type" value="Genomic_DNA"/>
</dbReference>
<dbReference type="EMBL" id="AF116261">
    <property type="protein sequence ID" value="AAF34728.1"/>
    <property type="status" value="JOINED"/>
    <property type="molecule type" value="Genomic_DNA"/>
</dbReference>
<dbReference type="EMBL" id="AF116262">
    <property type="protein sequence ID" value="AAF34728.1"/>
    <property type="status" value="JOINED"/>
    <property type="molecule type" value="Genomic_DNA"/>
</dbReference>
<dbReference type="EMBL" id="AF116263">
    <property type="protein sequence ID" value="AAF34728.1"/>
    <property type="status" value="JOINED"/>
    <property type="molecule type" value="Genomic_DNA"/>
</dbReference>
<dbReference type="EMBL" id="AF116264">
    <property type="protein sequence ID" value="AAF34728.1"/>
    <property type="status" value="JOINED"/>
    <property type="molecule type" value="Genomic_DNA"/>
</dbReference>
<dbReference type="EMBL" id="AF116265">
    <property type="protein sequence ID" value="AAF34728.1"/>
    <property type="status" value="JOINED"/>
    <property type="molecule type" value="Genomic_DNA"/>
</dbReference>
<dbReference type="EMBL" id="AF116266">
    <property type="protein sequence ID" value="AAF34728.1"/>
    <property type="status" value="JOINED"/>
    <property type="molecule type" value="Genomic_DNA"/>
</dbReference>
<dbReference type="EMBL" id="AL080187">
    <property type="protein sequence ID" value="CAB45768.2"/>
    <property type="molecule type" value="mRNA"/>
</dbReference>
<dbReference type="EMBL" id="CR456543">
    <property type="protein sequence ID" value="CAG30429.1"/>
    <property type="molecule type" value="mRNA"/>
</dbReference>
<dbReference type="EMBL" id="AY522921">
    <property type="protein sequence ID" value="AAR92478.1"/>
    <property type="molecule type" value="Genomic_DNA"/>
</dbReference>
<dbReference type="EMBL" id="AK291212">
    <property type="protein sequence ID" value="BAF83901.1"/>
    <property type="molecule type" value="mRNA"/>
</dbReference>
<dbReference type="EMBL" id="AL022322">
    <property type="status" value="NOT_ANNOTATED_CDS"/>
    <property type="molecule type" value="Genomic_DNA"/>
</dbReference>
<dbReference type="EMBL" id="CH471095">
    <property type="protein sequence ID" value="EAW60219.1"/>
    <property type="molecule type" value="Genomic_DNA"/>
</dbReference>
<dbReference type="EMBL" id="CH471095">
    <property type="protein sequence ID" value="EAW60220.1"/>
    <property type="molecule type" value="Genomic_DNA"/>
</dbReference>
<dbReference type="EMBL" id="BC036742">
    <property type="protein sequence ID" value="AAH36742.2"/>
    <property type="molecule type" value="mRNA"/>
</dbReference>
<dbReference type="EMBL" id="BC051904">
    <property type="protein sequence ID" value="AAH51904.1"/>
    <property type="molecule type" value="mRNA"/>
</dbReference>
<dbReference type="CCDS" id="CCDS13967.1">
    <molecule id="O60733-1"/>
</dbReference>
<dbReference type="CCDS" id="CCDS33645.1">
    <molecule id="O60733-2"/>
</dbReference>
<dbReference type="RefSeq" id="NP_001004426.1">
    <molecule id="O60733-2"/>
    <property type="nucleotide sequence ID" value="NM_001004426.3"/>
</dbReference>
<dbReference type="RefSeq" id="NP_001186491.1">
    <molecule id="O60733-2"/>
    <property type="nucleotide sequence ID" value="NM_001199562.3"/>
</dbReference>
<dbReference type="RefSeq" id="NP_001336793.1">
    <molecule id="O60733-1"/>
    <property type="nucleotide sequence ID" value="NM_001349864.2"/>
</dbReference>
<dbReference type="RefSeq" id="NP_001336794.1">
    <molecule id="O60733-2"/>
    <property type="nucleotide sequence ID" value="NM_001349865.2"/>
</dbReference>
<dbReference type="RefSeq" id="NP_001336795.1">
    <molecule id="O60733-2"/>
    <property type="nucleotide sequence ID" value="NM_001349866.2"/>
</dbReference>
<dbReference type="RefSeq" id="NP_003551.2">
    <molecule id="O60733-1"/>
    <property type="nucleotide sequence ID" value="NM_003560.2"/>
</dbReference>
<dbReference type="RefSeq" id="XP_005261821.1">
    <property type="nucleotide sequence ID" value="XM_005261764.2"/>
</dbReference>
<dbReference type="RefSeq" id="XP_005261822.1">
    <property type="nucleotide sequence ID" value="XM_005261765.1"/>
</dbReference>
<dbReference type="RefSeq" id="XP_005261823.1">
    <property type="nucleotide sequence ID" value="XM_005261766.1"/>
</dbReference>
<dbReference type="RefSeq" id="XP_006724395.1">
    <property type="nucleotide sequence ID" value="XM_006724332.3"/>
</dbReference>
<dbReference type="RefSeq" id="XP_016884470.1">
    <property type="nucleotide sequence ID" value="XM_017028981.1"/>
</dbReference>
<dbReference type="RefSeq" id="XP_016884471.1">
    <property type="nucleotide sequence ID" value="XM_017028982.1"/>
</dbReference>
<dbReference type="RefSeq" id="XP_016884477.1">
    <property type="nucleotide sequence ID" value="XM_017028988.1"/>
</dbReference>
<dbReference type="SMR" id="O60733"/>
<dbReference type="BioGRID" id="113986">
    <property type="interactions" value="31"/>
</dbReference>
<dbReference type="FunCoup" id="O60733">
    <property type="interactions" value="1469"/>
</dbReference>
<dbReference type="IntAct" id="O60733">
    <property type="interactions" value="15"/>
</dbReference>
<dbReference type="MINT" id="O60733"/>
<dbReference type="STRING" id="9606.ENSP00000333142"/>
<dbReference type="BindingDB" id="O60733"/>
<dbReference type="ChEMBL" id="CHEMBL3213"/>
<dbReference type="DrugBank" id="DB01103">
    <property type="generic name" value="Quinacrine"/>
</dbReference>
<dbReference type="SwissLipids" id="SLP:000000618"/>
<dbReference type="iPTMnet" id="O60733"/>
<dbReference type="PhosphoSitePlus" id="O60733"/>
<dbReference type="BioMuta" id="PLA2G6"/>
<dbReference type="jPOST" id="O60733"/>
<dbReference type="MassIVE" id="O60733"/>
<dbReference type="PaxDb" id="9606-ENSP00000333142"/>
<dbReference type="PeptideAtlas" id="O60733"/>
<dbReference type="ProteomicsDB" id="49578">
    <molecule id="O60733-1"/>
</dbReference>
<dbReference type="ProteomicsDB" id="49579">
    <molecule id="O60733-2"/>
</dbReference>
<dbReference type="ProteomicsDB" id="49580">
    <molecule id="O60733-3"/>
</dbReference>
<dbReference type="ProteomicsDB" id="49581">
    <molecule id="O60733-4"/>
</dbReference>
<dbReference type="Antibodypedia" id="225">
    <property type="antibodies" value="243 antibodies from 32 providers"/>
</dbReference>
<dbReference type="DNASU" id="8398"/>
<dbReference type="Ensembl" id="ENST00000332509.8">
    <molecule id="O60733-1"/>
    <property type="protein sequence ID" value="ENSP00000333142.3"/>
    <property type="gene ID" value="ENSG00000184381.20"/>
</dbReference>
<dbReference type="Ensembl" id="ENST00000335539.7">
    <molecule id="O60733-2"/>
    <property type="protein sequence ID" value="ENSP00000335149.3"/>
    <property type="gene ID" value="ENSG00000184381.20"/>
</dbReference>
<dbReference type="Ensembl" id="ENST00000402064.5">
    <molecule id="O60733-2"/>
    <property type="protein sequence ID" value="ENSP00000386100.1"/>
    <property type="gene ID" value="ENSG00000184381.20"/>
</dbReference>
<dbReference type="Ensembl" id="ENST00000660610.1">
    <molecule id="O60733-1"/>
    <property type="protein sequence ID" value="ENSP00000499555.1"/>
    <property type="gene ID" value="ENSG00000184381.20"/>
</dbReference>
<dbReference type="Ensembl" id="ENST00000663895.1">
    <molecule id="O60733-1"/>
    <property type="protein sequence ID" value="ENSP00000499712.1"/>
    <property type="gene ID" value="ENSG00000184381.20"/>
</dbReference>
<dbReference type="Ensembl" id="ENST00000667521.1">
    <molecule id="O60733-1"/>
    <property type="protein sequence ID" value="ENSP00000499665.1"/>
    <property type="gene ID" value="ENSG00000184381.20"/>
</dbReference>
<dbReference type="GeneID" id="8398"/>
<dbReference type="KEGG" id="hsa:8398"/>
<dbReference type="MANE-Select" id="ENST00000332509.8">
    <property type="protein sequence ID" value="ENSP00000333142.3"/>
    <property type="RefSeq nucleotide sequence ID" value="NM_003560.4"/>
    <property type="RefSeq protein sequence ID" value="NP_003551.2"/>
</dbReference>
<dbReference type="UCSC" id="uc003auy.2">
    <molecule id="O60733-1"/>
    <property type="organism name" value="human"/>
</dbReference>
<dbReference type="AGR" id="HGNC:9039"/>
<dbReference type="CTD" id="8398"/>
<dbReference type="DisGeNET" id="8398"/>
<dbReference type="GeneCards" id="PLA2G6"/>
<dbReference type="GeneReviews" id="PLA2G6"/>
<dbReference type="HGNC" id="HGNC:9039">
    <property type="gene designation" value="PLA2G6"/>
</dbReference>
<dbReference type="HPA" id="ENSG00000184381">
    <property type="expression patterns" value="Low tissue specificity"/>
</dbReference>
<dbReference type="MalaCards" id="PLA2G6"/>
<dbReference type="MIM" id="256600">
    <property type="type" value="phenotype"/>
</dbReference>
<dbReference type="MIM" id="603604">
    <property type="type" value="gene"/>
</dbReference>
<dbReference type="MIM" id="610217">
    <property type="type" value="phenotype"/>
</dbReference>
<dbReference type="MIM" id="612953">
    <property type="type" value="phenotype"/>
</dbReference>
<dbReference type="neXtProt" id="NX_O60733"/>
<dbReference type="OpenTargets" id="ENSG00000184381"/>
<dbReference type="Orphanet" id="199351">
    <property type="disease" value="Adult-onset dystonia-parkinsonism"/>
</dbReference>
<dbReference type="Orphanet" id="35069">
    <property type="disease" value="Infantile neuroaxonal dystrophy"/>
</dbReference>
<dbReference type="PharmGKB" id="PA33367"/>
<dbReference type="VEuPathDB" id="HostDB:ENSG00000184381"/>
<dbReference type="eggNOG" id="KOG0513">
    <property type="taxonomic scope" value="Eukaryota"/>
</dbReference>
<dbReference type="GeneTree" id="ENSGT00940000158756"/>
<dbReference type="HOGENOM" id="CLU_010817_0_0_1"/>
<dbReference type="InParanoid" id="O60733"/>
<dbReference type="OMA" id="VVYSHTH"/>
<dbReference type="OrthoDB" id="10021675at2759"/>
<dbReference type="PAN-GO" id="O60733">
    <property type="GO annotations" value="5 GO annotations based on evolutionary models"/>
</dbReference>
<dbReference type="PhylomeDB" id="O60733"/>
<dbReference type="TreeFam" id="TF319230"/>
<dbReference type="BRENDA" id="3.1.1.4">
    <property type="organism ID" value="2681"/>
</dbReference>
<dbReference type="PathwayCommons" id="O60733"/>
<dbReference type="Reactome" id="R-HSA-1482788">
    <property type="pathway name" value="Acyl chain remodelling of PC"/>
</dbReference>
<dbReference type="Reactome" id="R-HSA-1482798">
    <property type="pathway name" value="Acyl chain remodeling of CL"/>
</dbReference>
<dbReference type="Reactome" id="R-HSA-1482839">
    <property type="pathway name" value="Acyl chain remodelling of PE"/>
</dbReference>
<dbReference type="Reactome" id="R-HSA-2029485">
    <property type="pathway name" value="Role of phospholipids in phagocytosis"/>
</dbReference>
<dbReference type="Reactome" id="R-HSA-6811436">
    <property type="pathway name" value="COPI-independent Golgi-to-ER retrograde traffic"/>
</dbReference>
<dbReference type="SignaLink" id="O60733"/>
<dbReference type="BioGRID-ORCS" id="8398">
    <property type="hits" value="8 hits in 1163 CRISPR screens"/>
</dbReference>
<dbReference type="ChiTaRS" id="PLA2G6">
    <property type="organism name" value="human"/>
</dbReference>
<dbReference type="GeneWiki" id="PLA2G6"/>
<dbReference type="GenomeRNAi" id="8398"/>
<dbReference type="Pharos" id="O60733">
    <property type="development level" value="Tchem"/>
</dbReference>
<dbReference type="PRO" id="PR:O60733"/>
<dbReference type="Proteomes" id="UP000005640">
    <property type="component" value="Chromosome 22"/>
</dbReference>
<dbReference type="RNAct" id="O60733">
    <property type="molecule type" value="protein"/>
</dbReference>
<dbReference type="Bgee" id="ENSG00000184381">
    <property type="expression patterns" value="Expressed in right uterine tube and 158 other cell types or tissues"/>
</dbReference>
<dbReference type="ExpressionAtlas" id="O60733">
    <property type="expression patterns" value="baseline and differential"/>
</dbReference>
<dbReference type="GO" id="GO:0005829">
    <property type="term" value="C:cytosol"/>
    <property type="evidence" value="ECO:0000304"/>
    <property type="project" value="Reactome"/>
</dbReference>
<dbReference type="GO" id="GO:0005615">
    <property type="term" value="C:extracellular space"/>
    <property type="evidence" value="ECO:0000314"/>
    <property type="project" value="UniProtKB"/>
</dbReference>
<dbReference type="GO" id="GO:0015630">
    <property type="term" value="C:microtubule cytoskeleton"/>
    <property type="evidence" value="ECO:0000314"/>
    <property type="project" value="HPA"/>
</dbReference>
<dbReference type="GO" id="GO:0005739">
    <property type="term" value="C:mitochondrion"/>
    <property type="evidence" value="ECO:0000314"/>
    <property type="project" value="FlyBase"/>
</dbReference>
<dbReference type="GO" id="GO:0016607">
    <property type="term" value="C:nuclear speck"/>
    <property type="evidence" value="ECO:0000314"/>
    <property type="project" value="HPA"/>
</dbReference>
<dbReference type="GO" id="GO:0005886">
    <property type="term" value="C:plasma membrane"/>
    <property type="evidence" value="ECO:0000314"/>
    <property type="project" value="HPA"/>
</dbReference>
<dbReference type="GO" id="GO:0031143">
    <property type="term" value="C:pseudopodium"/>
    <property type="evidence" value="ECO:0007669"/>
    <property type="project" value="UniProtKB-SubCell"/>
</dbReference>
<dbReference type="GO" id="GO:0003847">
    <property type="term" value="F:1-alkyl-2-acetylglycerophosphocholine esterase activity"/>
    <property type="evidence" value="ECO:0000250"/>
    <property type="project" value="UniProtKB"/>
</dbReference>
<dbReference type="GO" id="GO:0047499">
    <property type="term" value="F:calcium-independent phospholipase A2 activity"/>
    <property type="evidence" value="ECO:0000314"/>
    <property type="project" value="UniProtKB"/>
</dbReference>
<dbReference type="GO" id="GO:0005516">
    <property type="term" value="F:calmodulin binding"/>
    <property type="evidence" value="ECO:0007669"/>
    <property type="project" value="UniProtKB-KW"/>
</dbReference>
<dbReference type="GO" id="GO:0016787">
    <property type="term" value="F:hydrolase activity"/>
    <property type="evidence" value="ECO:0000304"/>
    <property type="project" value="Reactome"/>
</dbReference>
<dbReference type="GO" id="GO:0042802">
    <property type="term" value="F:identical protein binding"/>
    <property type="evidence" value="ECO:0000353"/>
    <property type="project" value="IntAct"/>
</dbReference>
<dbReference type="GO" id="GO:0052816">
    <property type="term" value="F:long-chain fatty acyl-CoA hydrolase activity"/>
    <property type="evidence" value="ECO:0000314"/>
    <property type="project" value="UniProtKB"/>
</dbReference>
<dbReference type="GO" id="GO:0004622">
    <property type="term" value="F:lysophospholipase activity"/>
    <property type="evidence" value="ECO:0000314"/>
    <property type="project" value="UniProtKB"/>
</dbReference>
<dbReference type="GO" id="GO:0004623">
    <property type="term" value="F:phospholipase A2 activity"/>
    <property type="evidence" value="ECO:0000304"/>
    <property type="project" value="ProtInc"/>
</dbReference>
<dbReference type="GO" id="GO:0017171">
    <property type="term" value="F:serine hydrolase activity"/>
    <property type="evidence" value="ECO:0007669"/>
    <property type="project" value="Ensembl"/>
</dbReference>
<dbReference type="GO" id="GO:0019731">
    <property type="term" value="P:antibacterial humoral response"/>
    <property type="evidence" value="ECO:0000314"/>
    <property type="project" value="UniProtKB"/>
</dbReference>
<dbReference type="GO" id="GO:0035965">
    <property type="term" value="P:cardiolipin acyl-chain remodeling"/>
    <property type="evidence" value="ECO:0000314"/>
    <property type="project" value="UniProtKB"/>
</dbReference>
<dbReference type="GO" id="GO:0006935">
    <property type="term" value="P:chemotaxis"/>
    <property type="evidence" value="ECO:0007669"/>
    <property type="project" value="UniProtKB-KW"/>
</dbReference>
<dbReference type="GO" id="GO:0038096">
    <property type="term" value="P:Fc-gamma receptor signaling pathway involved in phagocytosis"/>
    <property type="evidence" value="ECO:0000304"/>
    <property type="project" value="Reactome"/>
</dbReference>
<dbReference type="GO" id="GO:0046473">
    <property type="term" value="P:phosphatidic acid metabolic process"/>
    <property type="evidence" value="ECO:0000250"/>
    <property type="project" value="UniProtKB"/>
</dbReference>
<dbReference type="GO" id="GO:0034638">
    <property type="term" value="P:phosphatidylcholine catabolic process"/>
    <property type="evidence" value="ECO:0000314"/>
    <property type="project" value="UniProtKB"/>
</dbReference>
<dbReference type="GO" id="GO:0046338">
    <property type="term" value="P:phosphatidylethanolamine catabolic process"/>
    <property type="evidence" value="ECO:0000250"/>
    <property type="project" value="UniProtKB"/>
</dbReference>
<dbReference type="GO" id="GO:0046469">
    <property type="term" value="P:platelet activating factor metabolic process"/>
    <property type="evidence" value="ECO:0000250"/>
    <property type="project" value="UniProtKB"/>
</dbReference>
<dbReference type="GO" id="GO:2000304">
    <property type="term" value="P:positive regulation of ceramide biosynthetic process"/>
    <property type="evidence" value="ECO:0000318"/>
    <property type="project" value="GO_Central"/>
</dbReference>
<dbReference type="GO" id="GO:0035774">
    <property type="term" value="P:positive regulation of insulin secretion involved in cellular response to glucose stimulus"/>
    <property type="evidence" value="ECO:0000250"/>
    <property type="project" value="UniProtKB"/>
</dbReference>
<dbReference type="CDD" id="cd07212">
    <property type="entry name" value="Pat_PNPLA9"/>
    <property type="match status" value="1"/>
</dbReference>
<dbReference type="FunFam" id="1.25.40.20:FF:000338">
    <property type="entry name" value="85/88 kDa calcium-independent phospholipase A2"/>
    <property type="match status" value="1"/>
</dbReference>
<dbReference type="FunFam" id="3.40.1090.10:FF:000006">
    <property type="entry name" value="85/88 kDa calcium-independent phospholipase A2"/>
    <property type="match status" value="1"/>
</dbReference>
<dbReference type="Gene3D" id="1.25.40.20">
    <property type="entry name" value="Ankyrin repeat-containing domain"/>
    <property type="match status" value="1"/>
</dbReference>
<dbReference type="Gene3D" id="3.40.1090.10">
    <property type="entry name" value="Cytosolic phospholipase A2 catalytic domain"/>
    <property type="match status" value="1"/>
</dbReference>
<dbReference type="InterPro" id="IPR016035">
    <property type="entry name" value="Acyl_Trfase/lysoPLipase"/>
</dbReference>
<dbReference type="InterPro" id="IPR002110">
    <property type="entry name" value="Ankyrin_rpt"/>
</dbReference>
<dbReference type="InterPro" id="IPR036770">
    <property type="entry name" value="Ankyrin_rpt-contain_sf"/>
</dbReference>
<dbReference type="InterPro" id="IPR047148">
    <property type="entry name" value="PLPL9"/>
</dbReference>
<dbReference type="InterPro" id="IPR002641">
    <property type="entry name" value="PNPLA_dom"/>
</dbReference>
<dbReference type="PANTHER" id="PTHR24139:SF34">
    <property type="entry name" value="85_88 KDA CALCIUM-INDEPENDENT PHOSPHOLIPASE A2"/>
    <property type="match status" value="1"/>
</dbReference>
<dbReference type="PANTHER" id="PTHR24139">
    <property type="entry name" value="CALCIUM-INDEPENDENT PHOSPHOLIPASE A2"/>
    <property type="match status" value="1"/>
</dbReference>
<dbReference type="Pfam" id="PF00023">
    <property type="entry name" value="Ank"/>
    <property type="match status" value="1"/>
</dbReference>
<dbReference type="Pfam" id="PF12796">
    <property type="entry name" value="Ank_2"/>
    <property type="match status" value="2"/>
</dbReference>
<dbReference type="Pfam" id="PF01734">
    <property type="entry name" value="Patatin"/>
    <property type="match status" value="1"/>
</dbReference>
<dbReference type="PRINTS" id="PR01415">
    <property type="entry name" value="ANKYRIN"/>
</dbReference>
<dbReference type="SMART" id="SM00248">
    <property type="entry name" value="ANK"/>
    <property type="match status" value="6"/>
</dbReference>
<dbReference type="SUPFAM" id="SSF48403">
    <property type="entry name" value="Ankyrin repeat"/>
    <property type="match status" value="1"/>
</dbReference>
<dbReference type="SUPFAM" id="SSF52151">
    <property type="entry name" value="FabD/lysophospholipase-like"/>
    <property type="match status" value="1"/>
</dbReference>
<dbReference type="PROSITE" id="PS50297">
    <property type="entry name" value="ANK_REP_REGION"/>
    <property type="match status" value="1"/>
</dbReference>
<dbReference type="PROSITE" id="PS50088">
    <property type="entry name" value="ANK_REPEAT"/>
    <property type="match status" value="4"/>
</dbReference>
<dbReference type="PROSITE" id="PS51635">
    <property type="entry name" value="PNPLA"/>
    <property type="match status" value="1"/>
</dbReference>
<name>PLPL9_HUMAN</name>
<protein>
    <recommendedName>
        <fullName>85/88 kDa calcium-independent phospholipase A2</fullName>
        <shortName>CaI-PLA2</shortName>
        <ecNumber evidence="12">3.1.1.4</ecNumber>
    </recommendedName>
    <alternativeName>
        <fullName>2-lysophosphatidylcholine acylhydrolase</fullName>
        <ecNumber evidence="12">3.1.1.5</ecNumber>
    </alternativeName>
    <alternativeName>
        <fullName>Group VI phospholipase A2</fullName>
        <shortName>GVI PLA2</shortName>
    </alternativeName>
    <alternativeName>
        <fullName>Intracellular membrane-associated calcium-independent phospholipase A2 beta</fullName>
        <shortName>iPLA2-beta</shortName>
    </alternativeName>
    <alternativeName>
        <fullName>Palmitoyl-CoA hydrolase</fullName>
        <ecNumber evidence="12">3.1.2.2</ecNumber>
    </alternativeName>
    <alternativeName>
        <fullName>Patatin-like phospholipase domain-containing protein 9</fullName>
        <shortName>PNPLA9</shortName>
    </alternativeName>
</protein>
<proteinExistence type="evidence at protein level"/>
<gene>
    <name type="primary">PLA2G6</name>
    <name type="synonym">PLPLA9</name>
</gene>
<keyword id="KW-0025">Alternative splicing</keyword>
<keyword id="KW-0040">ANK repeat</keyword>
<keyword id="KW-0112">Calmodulin-binding</keyword>
<keyword id="KW-1003">Cell membrane</keyword>
<keyword id="KW-0966">Cell projection</keyword>
<keyword id="KW-0145">Chemotaxis</keyword>
<keyword id="KW-0963">Cytoplasm</keyword>
<keyword id="KW-0225">Disease variant</keyword>
<keyword id="KW-1023">Dystonia</keyword>
<keyword id="KW-0378">Hydrolase</keyword>
<keyword id="KW-0443">Lipid metabolism</keyword>
<keyword id="KW-0472">Membrane</keyword>
<keyword id="KW-0496">Mitochondrion</keyword>
<keyword id="KW-0523">Neurodegeneration</keyword>
<keyword id="KW-0907">Parkinson disease</keyword>
<keyword id="KW-0908">Parkinsonism</keyword>
<keyword id="KW-0582">Pharmaceutical</keyword>
<keyword id="KW-1208">Phospholipid metabolism</keyword>
<keyword id="KW-1267">Proteomics identification</keyword>
<keyword id="KW-1185">Reference proteome</keyword>
<keyword id="KW-0677">Repeat</keyword>
<keyword id="KW-0812">Transmembrane</keyword>
<keyword id="KW-1133">Transmembrane helix</keyword>